<evidence type="ECO:0000250" key="1">
    <source>
        <dbReference type="UniProtKB" id="P84025"/>
    </source>
</evidence>
<evidence type="ECO:0000250" key="2">
    <source>
        <dbReference type="UniProtKB" id="Q8BUN5"/>
    </source>
</evidence>
<evidence type="ECO:0000255" key="3">
    <source>
        <dbReference type="PROSITE-ProRule" id="PRU00438"/>
    </source>
</evidence>
<evidence type="ECO:0000255" key="4">
    <source>
        <dbReference type="PROSITE-ProRule" id="PRU00439"/>
    </source>
</evidence>
<evidence type="ECO:0000256" key="5">
    <source>
        <dbReference type="SAM" id="MobiDB-lite"/>
    </source>
</evidence>
<evidence type="ECO:0000269" key="6">
    <source>
    </source>
</evidence>
<evidence type="ECO:0000269" key="7">
    <source>
    </source>
</evidence>
<evidence type="ECO:0000269" key="8">
    <source>
    </source>
</evidence>
<evidence type="ECO:0000269" key="9">
    <source>
    </source>
</evidence>
<evidence type="ECO:0000269" key="10">
    <source>
    </source>
</evidence>
<evidence type="ECO:0000269" key="11">
    <source>
    </source>
</evidence>
<evidence type="ECO:0000269" key="12">
    <source>
    </source>
</evidence>
<evidence type="ECO:0000269" key="13">
    <source>
    </source>
</evidence>
<evidence type="ECO:0000269" key="14">
    <source>
    </source>
</evidence>
<evidence type="ECO:0000269" key="15">
    <source>
    </source>
</evidence>
<evidence type="ECO:0000269" key="16">
    <source>
    </source>
</evidence>
<evidence type="ECO:0000269" key="17">
    <source>
    </source>
</evidence>
<evidence type="ECO:0000269" key="18">
    <source>
    </source>
</evidence>
<evidence type="ECO:0000269" key="19">
    <source>
    </source>
</evidence>
<evidence type="ECO:0000269" key="20">
    <source>
    </source>
</evidence>
<evidence type="ECO:0000269" key="21">
    <source>
    </source>
</evidence>
<evidence type="ECO:0000269" key="22">
    <source>
    </source>
</evidence>
<evidence type="ECO:0000269" key="23">
    <source>
    </source>
</evidence>
<evidence type="ECO:0000269" key="24">
    <source>
    </source>
</evidence>
<evidence type="ECO:0000269" key="25">
    <source>
    </source>
</evidence>
<evidence type="ECO:0000269" key="26">
    <source>
    </source>
</evidence>
<evidence type="ECO:0000269" key="27">
    <source>
    </source>
</evidence>
<evidence type="ECO:0000269" key="28">
    <source>
    </source>
</evidence>
<evidence type="ECO:0000269" key="29">
    <source>
    </source>
</evidence>
<evidence type="ECO:0000269" key="30">
    <source>
    </source>
</evidence>
<evidence type="ECO:0000269" key="31">
    <source>
    </source>
</evidence>
<evidence type="ECO:0000269" key="32">
    <source>
    </source>
</evidence>
<evidence type="ECO:0000269" key="33">
    <source>
    </source>
</evidence>
<evidence type="ECO:0000269" key="34">
    <source>
    </source>
</evidence>
<evidence type="ECO:0000269" key="35">
    <source>
    </source>
</evidence>
<evidence type="ECO:0000269" key="36">
    <source>
    </source>
</evidence>
<evidence type="ECO:0000269" key="37">
    <source>
    </source>
</evidence>
<evidence type="ECO:0000269" key="38">
    <source>
    </source>
</evidence>
<evidence type="ECO:0000269" key="39">
    <source>
    </source>
</evidence>
<evidence type="ECO:0000269" key="40">
    <source>
    </source>
</evidence>
<evidence type="ECO:0000269" key="41">
    <source>
    </source>
</evidence>
<evidence type="ECO:0000269" key="42">
    <source>
    </source>
</evidence>
<evidence type="ECO:0000269" key="43">
    <source>
    </source>
</evidence>
<evidence type="ECO:0000269" key="44">
    <source>
    </source>
</evidence>
<evidence type="ECO:0000269" key="45">
    <source>
    </source>
</evidence>
<evidence type="ECO:0000269" key="46">
    <source>
    </source>
</evidence>
<evidence type="ECO:0000269" key="47">
    <source>
    </source>
</evidence>
<evidence type="ECO:0000269" key="48">
    <source>
    </source>
</evidence>
<evidence type="ECO:0000269" key="49">
    <source>
    </source>
</evidence>
<evidence type="ECO:0000269" key="50">
    <source>
    </source>
</evidence>
<evidence type="ECO:0000269" key="51">
    <source>
    </source>
</evidence>
<evidence type="ECO:0000269" key="52">
    <source>
    </source>
</evidence>
<evidence type="ECO:0000269" key="53">
    <source>
    </source>
</evidence>
<evidence type="ECO:0000269" key="54">
    <source>
    </source>
</evidence>
<evidence type="ECO:0000269" key="55">
    <source>
    </source>
</evidence>
<evidence type="ECO:0000269" key="56">
    <source>
    </source>
</evidence>
<evidence type="ECO:0000269" key="57">
    <source>
    </source>
</evidence>
<evidence type="ECO:0000269" key="58">
    <source>
    </source>
</evidence>
<evidence type="ECO:0000269" key="59">
    <source>
    </source>
</evidence>
<evidence type="ECO:0000269" key="60">
    <source>
    </source>
</evidence>
<evidence type="ECO:0000269" key="61">
    <source>
    </source>
</evidence>
<evidence type="ECO:0000269" key="62">
    <source>
    </source>
</evidence>
<evidence type="ECO:0000303" key="63">
    <source>
    </source>
</evidence>
<evidence type="ECO:0000305" key="64"/>
<evidence type="ECO:0000305" key="65">
    <source>
    </source>
</evidence>
<evidence type="ECO:0007744" key="66">
    <source>
    </source>
</evidence>
<evidence type="ECO:0007744" key="67">
    <source>
    </source>
</evidence>
<evidence type="ECO:0007744" key="68">
    <source>
    </source>
</evidence>
<evidence type="ECO:0007744" key="69">
    <source>
    </source>
</evidence>
<evidence type="ECO:0007829" key="70">
    <source>
        <dbReference type="PDB" id="1MJS"/>
    </source>
</evidence>
<evidence type="ECO:0007829" key="71">
    <source>
        <dbReference type="PDB" id="1MK2"/>
    </source>
</evidence>
<evidence type="ECO:0007829" key="72">
    <source>
        <dbReference type="PDB" id="1U7F"/>
    </source>
</evidence>
<evidence type="ECO:0007829" key="73">
    <source>
        <dbReference type="PDB" id="5OD6"/>
    </source>
</evidence>
<evidence type="ECO:0007829" key="74">
    <source>
        <dbReference type="PDB" id="5XOC"/>
    </source>
</evidence>
<evidence type="ECO:0007829" key="75">
    <source>
        <dbReference type="PDB" id="6ZMN"/>
    </source>
</evidence>
<gene>
    <name type="primary">SMAD3</name>
    <name type="synonym">MADH3</name>
</gene>
<comment type="function">
    <text evidence="6 16 19 24 27 30 34 39 40 59 62">Receptor-regulated SMAD (R-SMAD) that is an intracellular signal transducer and transcriptional modulator activated by TGF-beta (transforming growth factor) and activin type 1 receptor kinases. Binds the TRE element in the promoter region of many genes that are regulated by TGF-beta and, on formation of the SMAD3/SMAD4 complex, activates transcription. Also can form a SMAD3/SMAD4/JUN/FOS complex at the AP-1/SMAD site to regulate TGF-beta-mediated transcription. Has an inhibitory effect on wound healing probably by modulating both growth and migration of primary keratinocytes and by altering the TGF-mediated chemotaxis of monocytes. This effect on wound healing appears to be hormone-sensitive. Regulator of chondrogenesis and osteogenesis and inhibits early healing of bone fractures. Positively regulates PDPK1 kinase activity by stimulating its dissociation from the 14-3-3 protein YWHAQ which acts as a negative regulator.</text>
</comment>
<comment type="subunit">
    <text evidence="1 2 6 7 8 9 10 11 12 13 14 15 17 18 19 20 21 22 23 25 26 27 28 29 32 33 34 36 37 38 40 41 42 43 47 48 49 50 51 52 54 56 57 58 59 60 61 62">Monomer; in the absence of TGF-beta (PubMed:9670020). Homooligomer; in the presence of TGF-beta (PubMed:9670020). Heterotrimer; forms a heterotrimer in the presence of TGF-beta consisting of two molecules of C-terminally phosphorylated SMAD2 or SMAD3 and one of SMAD4 to form the transcriptionally active SMAD2/SMAD3-SMAD4 complex (PubMed:11224571, PubMed:15350224, PubMed:15799969, PubMed:9670020). Part of a complex consisting of MAGI2/ARIP1, ACVR2A, ACVR1B and SMAD3 (PubMed:9892009). Forms a complex with SMAD2 and TRIM33 upon addition of TGF-beta (PubMed:16751102). Found in a complex composed of SMAD3, RAN and XPO4; within the complex interacts directly with XPO4 (PubMed:16449645). Component of the multimeric complex SMAD3/SMAD4/JUN/FOS which forms at the AP1 promoter site; required for synergistic transcriptional activity in response to TGF-beta (PubMed:10995748, PubMed:9732876). Part of a ternary complex composed of SMAD3, ITCH/AIP4 and NEDD9/HEF1; within the complex NEDD9/HEF1 interacts (via N-terminus) with ITCH/AIP4; the complex mediates ubiquitination and proteasomal degradation of NEDD9/HEF1 (PubMed:15051726). Interacts with NEDD9; the interaction promotes NEDD9 ubiquitination and proteasomal degradation (PubMed:15051726). Interacts (via an N-terminal domain) with JUN (via its basic DNA binding and leucine zipper domains); this interaction is essential for DNA binding and cooperative transcriptional activity in response to TGF-beta (PubMed:10995748, PubMed:9732876). Identified in a complex that contains at least ZNF451, SMAD2, SMAD3 and SMAD4 (PubMed:24324267). Interacts with PPM1A; the interaction dephosphorylates SMAD3 in the C-terminal SXS motif leading to disruption of the SMAD2/3-SMAD4 complex, nuclear export and termination of TGF-beta signaling (PubMed:16751101). Interacts (via MH2 domain) with ZMIZ1 (via SP-RING-type domain); in the TGF-beta signaling pathway increases the activity of the SMAD3/SMAD4 transcriptional complex (PubMed:16777850). Interacts (when phosphorylated) with RNF111; RNF111 acts as an enhancer of the transcriptional responses by mediating ubiquitination and degradation of SMAD3 inhibitors (PubMed:9311995). Interacts (dephosphorylated form via the MH1 and MH2 domains) with RANBP3 (via its C-terminal R domain); the interaction results in the export of dephosphorylated SMAD3 out of the nucleus and termination of the TGF-beta signaling (PubMed:19289081). Interacts (via MH2 domain) with LEMD3; the interaction represses SMAD3 transcriptional activity through preventing the formation of the heteromeric complex with SMAD4 and translocation to the nucleus (PubMed:15601644, PubMed:15647271). Interacts (via the linker region) with EP300 (C-terminal); the interaction promotes SMAD3 acetylation and is enhanced by TGF-beta phosphorylation in the C-terminal of SMAD3 (PubMed:15588252, PubMed:9843571). This interaction can be blocked by competitive binding of adenovirus oncoprotein E1A to the same C-terminal site on EP300, which then results in partially inhibited SMAD3/SMAD4 transcriptional activity (PubMed:15588252, PubMed:9843571). Interacts with TGFBR1 (PubMed:9311995). Interacts with TGFB1I1 (PubMed:15561701). Interacts with PRDM16 (PubMed:19049980). Interacts with SNW1 (PubMed:11278756). Interacts (via MH2 domain) with ZFYVE9 (PubMed:12154125, PubMed:9865696). Interacts with HDAC1 (PubMed:19049980). Interacts with TGIF2 (PubMed:11427533). Interacts with SKOR1 (PubMed:17292623). Interacts with SKOR2 (PubMed:16200078). Interacts with DACH1; the interaction inhibits the TGF-beta signaling (PubMed:14525983). Interacts with RBPMS (PubMed:17099224). Interacts (via MH2 domain) with MECOM (PubMed:15897867, PubMed:9665135). Interacts with WWTR1 (via its coiled-coil domain) (PubMed:18568018). Interacts with SKI; the interaction represses SMAD3 transcriptional activity (PubMed:19049980). Interacts with MEN1 (PubMed:11274402). Interacts with IL1F7 (PubMed:20935647). Interaction with CSNK1G2 (PubMed:18794808). Interacts with PDPK1 (via PH domain) (PubMed:17327236). Interacts with DAB2; the interactions are enhanced upon TGF-beta stimulation (PubMed:11387212). Interacts with USP15 (PubMed:21947082). Interacts with PPP5C; the interaction decreases SMAD3 phosphorylation and protein levels (PubMed:22781750). Interacts with LDLRAD4 (via the SMAD interaction motif) (PubMed:24627487). Interacts with PMEPA1 (PubMed:20129061). Interacts with ZNF451 (PubMed:24324267). Interacts with ZFHX3 (PubMed:25105025). Interacts weakly with ZNF8 (PubMed:12370310). Interacts with STUB1, HSPA1A, HSPA1B, HSP90AA1 and HSP90AB1 (PubMed:24613385). Interacts with YAP1 (when phosphorylated at 'Ser-127') (By similarity). Interacts with MAGI2/ARIP1 (By similarity). Interacts (via MH2 domain) with CITED2 (via C-terminus) (By similarity). Interacts with HGS (By similarity). Interacts with WWP1 (By similarity). Interacts with TTRAP (By similarity). Interacts with FOXL2 (By similarity). Interacts with PML (By similarity). Interacts with NEDD4L; the interaction requires TGF-beta stimulation (By similarity). Interacts with ZC3H3 (By similarity). Interacts with TGIF. Interacts with CREBBP. Interacts with ATF2. Interacts with NEDD9; the interaction is inhibited by oxidation of NEDD9 (PubMed:29899023). Interacts with MTMR4; negatively regulates TGF-beta signaling through SMAD3 dephosphorylation and retention in endosomes (PubMed:20061380).</text>
</comment>
<comment type="subunit">
    <text evidence="35">(Microbial infection) Interacts with SARS-CoV nucleoprotein.</text>
</comment>
<comment type="interaction">
    <interactant intactId="EBI-347161">
        <id>P84022</id>
    </interactant>
    <interactant intactId="EBI-25646567">
        <id>Q06481-5</id>
        <label>APLP2</label>
    </interactant>
    <organismsDiffer>false</organismsDiffer>
    <experiments>3</experiments>
</comment>
<comment type="interaction">
    <interactant intactId="EBI-347161">
        <id>P84022</id>
    </interactant>
    <interactant intactId="EBI-77613">
        <id>P05067</id>
        <label>APP</label>
    </interactant>
    <organismsDiffer>false</organismsDiffer>
    <experiments>3</experiments>
</comment>
<comment type="interaction">
    <interactant intactId="EBI-347161">
        <id>P84022</id>
    </interactant>
    <interactant intactId="EBI-2548012">
        <id>Q9H2G9</id>
        <label>BLZF1</label>
    </interactant>
    <organismsDiffer>false</organismsDiffer>
    <experiments>9</experiments>
</comment>
<comment type="interaction">
    <interactant intactId="EBI-347161">
        <id>P84022</id>
    </interactant>
    <interactant intactId="EBI-1383687">
        <id>Q9UQM7</id>
        <label>CAMK2A</label>
    </interactant>
    <organismsDiffer>false</organismsDiffer>
    <experiments>3</experiments>
</comment>
<comment type="interaction">
    <interactant intactId="EBI-347161">
        <id>P84022</id>
    </interactant>
    <interactant intactId="EBI-12248206">
        <id>P29466-3</id>
        <label>CASP1</label>
    </interactant>
    <organismsDiffer>false</organismsDiffer>
    <experiments>3</experiments>
</comment>
<comment type="interaction">
    <interactant intactId="EBI-347161">
        <id>P84022</id>
    </interactant>
    <interactant intactId="EBI-11748295">
        <id>E9PSE9</id>
        <label>CCDC198</label>
    </interactant>
    <organismsDiffer>false</organismsDiffer>
    <experiments>3</experiments>
</comment>
<comment type="interaction">
    <interactant intactId="EBI-347161">
        <id>P84022</id>
    </interactant>
    <interactant intactId="EBI-740841">
        <id>Q8N5R6</id>
        <label>CCDC33</label>
    </interactant>
    <organismsDiffer>false</organismsDiffer>
    <experiments>4</experiments>
</comment>
<comment type="interaction">
    <interactant intactId="EBI-347161">
        <id>P84022</id>
    </interactant>
    <interactant intactId="EBI-947551">
        <id>Q9H2X0</id>
        <label>CHRD</label>
    </interactant>
    <organismsDiffer>false</organismsDiffer>
    <experiments>2</experiments>
</comment>
<comment type="interaction">
    <interactant intactId="EBI-347161">
        <id>P84022</id>
    </interactant>
    <interactant intactId="EBI-746909">
        <id>Q8N684</id>
        <label>CPSF7</label>
    </interactant>
    <organismsDiffer>false</organismsDiffer>
    <experiments>3</experiments>
</comment>
<comment type="interaction">
    <interactant intactId="EBI-347161">
        <id>P84022</id>
    </interactant>
    <interactant intactId="EBI-11523759">
        <id>Q8N684-3</id>
        <label>CPSF7</label>
    </interactant>
    <organismsDiffer>false</organismsDiffer>
    <experiments>3</experiments>
</comment>
<comment type="interaction">
    <interactant intactId="EBI-347161">
        <id>P84022</id>
    </interactant>
    <interactant intactId="EBI-748171">
        <id>O43186</id>
        <label>CRX</label>
    </interactant>
    <organismsDiffer>false</organismsDiffer>
    <experiments>3</experiments>
</comment>
<comment type="interaction">
    <interactant intactId="EBI-347161">
        <id>P84022</id>
    </interactant>
    <interactant intactId="EBI-766158">
        <id>Q96PZ7</id>
        <label>CSMD1</label>
    </interactant>
    <organismsDiffer>false</organismsDiffer>
    <experiments>3</experiments>
</comment>
<comment type="interaction">
    <interactant intactId="EBI-347161">
        <id>P84022</id>
    </interactant>
    <interactant intactId="EBI-9087876">
        <id>P48730-2</id>
        <label>CSNK1D</label>
    </interactant>
    <organismsDiffer>false</organismsDiffer>
    <experiments>3</experiments>
</comment>
<comment type="interaction">
    <interactant intactId="EBI-347161">
        <id>P84022</id>
    </interactant>
    <interactant intactId="EBI-1171238">
        <id>P98082</id>
        <label>DAB2</label>
    </interactant>
    <organismsDiffer>false</organismsDiffer>
    <experiments>3</experiments>
</comment>
<comment type="interaction">
    <interactant intactId="EBI-347161">
        <id>P84022</id>
    </interactant>
    <interactant intactId="EBI-351962">
        <id>P17844</id>
        <label>DDX5</label>
    </interactant>
    <organismsDiffer>false</organismsDiffer>
    <experiments>2</experiments>
</comment>
<comment type="interaction">
    <interactant intactId="EBI-347161">
        <id>P84022</id>
    </interactant>
    <interactant intactId="EBI-2695893">
        <id>Q9BZ29</id>
        <label>DOCK9</label>
    </interactant>
    <organismsDiffer>false</organismsDiffer>
    <experiments>3</experiments>
</comment>
<comment type="interaction">
    <interactant intactId="EBI-347161">
        <id>P84022</id>
    </interactant>
    <interactant intactId="EBI-6658203">
        <id>Q86YD7</id>
        <label>FAM90A1</label>
    </interactant>
    <organismsDiffer>false</organismsDiffer>
    <experiments>3</experiments>
</comment>
<comment type="interaction">
    <interactant intactId="EBI-347161">
        <id>P84022</id>
    </interactant>
    <interactant intactId="EBI-2271018">
        <id>Q01543</id>
        <label>FLI1</label>
    </interactant>
    <organismsDiffer>false</organismsDiffer>
    <experiments>3</experiments>
</comment>
<comment type="interaction">
    <interactant intactId="EBI-347161">
        <id>P84022</id>
    </interactant>
    <interactant intactId="EBI-1759806">
        <id>O75593</id>
        <label>FOXH1</label>
    </interactant>
    <organismsDiffer>false</organismsDiffer>
    <experiments>4</experiments>
</comment>
<comment type="interaction">
    <interactant intactId="EBI-347161">
        <id>P84022</id>
    </interactant>
    <interactant intactId="EBI-1644164">
        <id>O43524</id>
        <label>FOXO3</label>
    </interactant>
    <organismsDiffer>false</organismsDiffer>
    <experiments>5</experiments>
</comment>
<comment type="interaction">
    <interactant intactId="EBI-347161">
        <id>P84022</id>
    </interactant>
    <interactant intactId="EBI-10821567">
        <id>P10070</id>
        <label>GLI2</label>
    </interactant>
    <organismsDiffer>false</organismsDiffer>
    <experiments>4</experiments>
</comment>
<comment type="interaction">
    <interactant intactId="EBI-347161">
        <id>P84022</id>
    </interactant>
    <interactant intactId="EBI-447269">
        <id>Q16665</id>
        <label>HIF1A</label>
    </interactant>
    <organismsDiffer>false</organismsDiffer>
    <experiments>6</experiments>
</comment>
<comment type="interaction">
    <interactant intactId="EBI-347161">
        <id>P84022</id>
    </interactant>
    <interactant intactId="EBI-358808">
        <id>O15397</id>
        <label>IPO8</label>
    </interactant>
    <organismsDiffer>false</organismsDiffer>
    <experiments>2</experiments>
</comment>
<comment type="interaction">
    <interactant intactId="EBI-347161">
        <id>P84022</id>
    </interactant>
    <interactant intactId="EBI-1055254">
        <id>Q8WXH2</id>
        <label>JPH3</label>
    </interactant>
    <organismsDiffer>false</organismsDiffer>
    <experiments>3</experiments>
</comment>
<comment type="interaction">
    <interactant intactId="EBI-347161">
        <id>P84022</id>
    </interactant>
    <interactant intactId="EBI-748397">
        <id>P50222</id>
        <label>MEOX2</label>
    </interactant>
    <organismsDiffer>false</organismsDiffer>
    <experiments>6</experiments>
</comment>
<comment type="interaction">
    <interactant intactId="EBI-347161">
        <id>P84022</id>
    </interactant>
    <interactant intactId="EBI-1052346">
        <id>Q9NYA4</id>
        <label>MTMR4</label>
    </interactant>
    <organismsDiffer>false</organismsDiffer>
    <experiments>2</experiments>
</comment>
<comment type="interaction">
    <interactant intactId="EBI-347161">
        <id>P84022</id>
    </interactant>
    <interactant intactId="EBI-447677">
        <id>Q99836</id>
        <label>MYD88</label>
    </interactant>
    <organismsDiffer>false</organismsDiffer>
    <experiments>3</experiments>
</comment>
<comment type="interaction">
    <interactant intactId="EBI-347161">
        <id>P84022</id>
    </interactant>
    <interactant intactId="EBI-11980721">
        <id>P46934-3</id>
        <label>NEDD4</label>
    </interactant>
    <organismsDiffer>false</organismsDiffer>
    <experiments>3</experiments>
</comment>
<comment type="interaction">
    <interactant intactId="EBI-347161">
        <id>P84022</id>
    </interactant>
    <interactant intactId="EBI-2825219">
        <id>Q16822</id>
        <label>PCK2</label>
    </interactant>
    <organismsDiffer>false</organismsDiffer>
    <experiments>2</experiments>
</comment>
<comment type="interaction">
    <interactant intactId="EBI-347161">
        <id>P84022</id>
    </interactant>
    <interactant intactId="EBI-713786">
        <id>Q8IXK0</id>
        <label>PHC2</label>
    </interactant>
    <organismsDiffer>false</organismsDiffer>
    <experiments>3</experiments>
</comment>
<comment type="interaction">
    <interactant intactId="EBI-347161">
        <id>P84022</id>
    </interactant>
    <interactant intactId="EBI-11527347">
        <id>Q8IXK0-5</id>
        <label>PHC2</label>
    </interactant>
    <organismsDiffer>false</organismsDiffer>
    <experiments>3</experiments>
</comment>
<comment type="interaction">
    <interactant intactId="EBI-347161">
        <id>P84022</id>
    </interactant>
    <interactant intactId="EBI-9090282">
        <id>P27986-2</id>
        <label>PIK3R1</label>
    </interactant>
    <organismsDiffer>false</organismsDiffer>
    <experiments>3</experiments>
</comment>
<comment type="interaction">
    <interactant intactId="EBI-347161">
        <id>P84022</id>
    </interactant>
    <interactant intactId="EBI-721802">
        <id>Q9BZL4</id>
        <label>PPP1R12C</label>
    </interactant>
    <organismsDiffer>false</organismsDiffer>
    <experiments>2</experiments>
</comment>
<comment type="interaction">
    <interactant intactId="EBI-347161">
        <id>P84022</id>
    </interactant>
    <interactant intactId="EBI-476586">
        <id>P17612</id>
        <label>PRKACA</label>
    </interactant>
    <organismsDiffer>false</organismsDiffer>
    <experiments>3</experiments>
</comment>
<comment type="interaction">
    <interactant intactId="EBI-347161">
        <id>P84022</id>
    </interactant>
    <interactant intactId="EBI-372273">
        <id>P20618</id>
        <label>PSMB1</label>
    </interactant>
    <organismsDiffer>false</organismsDiffer>
    <experiments>3</experiments>
</comment>
<comment type="interaction">
    <interactant intactId="EBI-347161">
        <id>P84022</id>
    </interactant>
    <interactant intactId="EBI-948111">
        <id>Q96EP0</id>
        <label>RNF31</label>
    </interactant>
    <organismsDiffer>false</organismsDiffer>
    <experiments>2</experiments>
</comment>
<comment type="interaction">
    <interactant intactId="EBI-347161">
        <id>P84022</id>
    </interactant>
    <interactant intactId="EBI-17181801">
        <id>P0C264</id>
        <label>SBK3</label>
    </interactant>
    <organismsDiffer>false</organismsDiffer>
    <experiments>3</experiments>
</comment>
<comment type="interaction">
    <interactant intactId="EBI-347161">
        <id>P84022</id>
    </interactant>
    <interactant intactId="EBI-945869">
        <id>Q9BYW2</id>
        <label>SETD2</label>
    </interactant>
    <organismsDiffer>false</organismsDiffer>
    <experiments>2</experiments>
</comment>
<comment type="interaction">
    <interactant intactId="EBI-347161">
        <id>P84022</id>
    </interactant>
    <interactant intactId="EBI-347281">
        <id>P12755</id>
        <label>SKI</label>
    </interactant>
    <organismsDiffer>false</organismsDiffer>
    <experiments>8</experiments>
</comment>
<comment type="interaction">
    <interactant intactId="EBI-347161">
        <id>P84022</id>
    </interactant>
    <interactant intactId="EBI-1040141">
        <id>Q15796</id>
        <label>SMAD2</label>
    </interactant>
    <organismsDiffer>false</organismsDiffer>
    <experiments>3</experiments>
</comment>
<comment type="interaction">
    <interactant intactId="EBI-347161">
        <id>P84022</id>
    </interactant>
    <interactant intactId="EBI-347161">
        <id>P84022</id>
        <label>SMAD3</label>
    </interactant>
    <organismsDiffer>false</organismsDiffer>
    <experiments>3</experiments>
</comment>
<comment type="interaction">
    <interactant intactId="EBI-347161">
        <id>P84022</id>
    </interactant>
    <interactant intactId="EBI-347263">
        <id>Q13485</id>
        <label>SMAD4</label>
    </interactant>
    <organismsDiffer>false</organismsDiffer>
    <experiments>37</experiments>
</comment>
<comment type="interaction">
    <interactant intactId="EBI-347161">
        <id>P84022</id>
    </interactant>
    <interactant intactId="EBI-396727">
        <id>Q9HAU4</id>
        <label>SMURF2</label>
    </interactant>
    <organismsDiffer>false</organismsDiffer>
    <experiments>8</experiments>
</comment>
<comment type="interaction">
    <interactant intactId="EBI-347161">
        <id>P84022</id>
    </interactant>
    <interactant intactId="EBI-632715">
        <id>Q13573</id>
        <label>SNW1</label>
    </interactant>
    <organismsDiffer>false</organismsDiffer>
    <experiments>5</experiments>
</comment>
<comment type="interaction">
    <interactant intactId="EBI-347161">
        <id>P84022</id>
    </interactant>
    <interactant intactId="EBI-307104">
        <id>Q13501</id>
        <label>SQSTM1</label>
    </interactant>
    <organismsDiffer>false</organismsDiffer>
    <experiments>3</experiments>
</comment>
<comment type="interaction">
    <interactant intactId="EBI-347161">
        <id>P84022</id>
    </interactant>
    <interactant intactId="EBI-750487">
        <id>Q8WW24</id>
        <label>TEKT4</label>
    </interactant>
    <organismsDiffer>false</organismsDiffer>
    <experiments>3</experiments>
</comment>
<comment type="interaction">
    <interactant intactId="EBI-347161">
        <id>P84022</id>
    </interactant>
    <interactant intactId="EBI-714215">
        <id>Q15583</id>
        <label>TGIF1</label>
    </interactant>
    <organismsDiffer>false</organismsDiffer>
    <experiments>3</experiments>
</comment>
<comment type="interaction">
    <interactant intactId="EBI-347161">
        <id>P84022</id>
    </interactant>
    <interactant intactId="EBI-717810">
        <id>Q08117</id>
        <label>TLE5</label>
    </interactant>
    <organismsDiffer>false</organismsDiffer>
    <experiments>4</experiments>
</comment>
<comment type="interaction">
    <interactant intactId="EBI-347161">
        <id>P84022</id>
    </interactant>
    <interactant intactId="EBI-11741437">
        <id>Q08117-2</id>
        <label>TLE5</label>
    </interactant>
    <organismsDiffer>false</organismsDiffer>
    <experiments>3</experiments>
</comment>
<comment type="interaction">
    <interactant intactId="EBI-347161">
        <id>P84022</id>
    </interactant>
    <interactant intactId="EBI-739485">
        <id>Q9Y3Q8</id>
        <label>TSC22D4</label>
    </interactant>
    <organismsDiffer>false</organismsDiffer>
    <experiments>2</experiments>
</comment>
<comment type="interaction">
    <interactant intactId="EBI-347161">
        <id>P84022</id>
    </interactant>
    <interactant intactId="EBI-302474">
        <id>Q93009</id>
        <label>USP7</label>
    </interactant>
    <organismsDiffer>false</organismsDiffer>
    <experiments>2</experiments>
</comment>
<comment type="interaction">
    <interactant intactId="EBI-347161">
        <id>P84022</id>
    </interactant>
    <interactant intactId="EBI-742157">
        <id>Q9H0M0</id>
        <label>WWP1</label>
    </interactant>
    <organismsDiffer>false</organismsDiffer>
    <experiments>9</experiments>
</comment>
<comment type="interaction">
    <interactant intactId="EBI-347161">
        <id>P84022</id>
    </interactant>
    <interactant intactId="EBI-743923">
        <id>O00308</id>
        <label>WWP2</label>
    </interactant>
    <organismsDiffer>false</organismsDiffer>
    <experiments>7</experiments>
</comment>
<comment type="interaction">
    <interactant intactId="EBI-347161">
        <id>P84022</id>
    </interactant>
    <interactant intactId="EBI-747793">
        <id>Q5D1E8</id>
        <label>ZC3H12A</label>
    </interactant>
    <organismsDiffer>false</organismsDiffer>
    <experiments>2</experiments>
</comment>
<comment type="interaction">
    <interactant intactId="EBI-347161">
        <id>P84022</id>
    </interactant>
    <interactant intactId="EBI-296817">
        <id>O95405</id>
        <label>ZFYVE9</label>
    </interactant>
    <organismsDiffer>false</organismsDiffer>
    <experiments>7</experiments>
</comment>
<comment type="interaction">
    <interactant intactId="EBI-347161">
        <id>P84022</id>
    </interactant>
    <interactant intactId="EBI-10251462">
        <id>Q6NX45</id>
        <label>ZNF774</label>
    </interactant>
    <organismsDiffer>false</organismsDiffer>
    <experiments>3</experiments>
</comment>
<comment type="interaction">
    <interactant intactId="EBI-347161">
        <id>P84022</id>
    </interactant>
    <interactant intactId="EBI-2899393">
        <id>Q64729</id>
        <label>Tgfbr1</label>
    </interactant>
    <organismsDiffer>true</organismsDiffer>
    <experiments>6</experiments>
</comment>
<comment type="interaction">
    <interactant intactId="EBI-347161">
        <id>P84022</id>
    </interactant>
    <interactant intactId="EBI-9213553">
        <id>PRO_0000278742</id>
        <dbReference type="UniProtKB" id="O92972"/>
    </interactant>
    <organismsDiffer>true</organismsDiffer>
    <experiments>6</experiments>
</comment>
<comment type="subcellular location">
    <subcellularLocation>
        <location evidence="22 24 27 34 39 40 44 48">Cytoplasm</location>
    </subcellularLocation>
    <subcellularLocation>
        <location evidence="20 22 24 27 39 40 44 48">Nucleus</location>
    </subcellularLocation>
    <text evidence="2 20 22 27 34 39 40 44">Cytoplasmic and nuclear in the absence of TGF-beta. On TGF-beta stimulation, migrates to the nucleus when complexed with SMAD4 (PubMed:15799969, PubMed:21145499). Through the action of the phosphatase PPM1A, released from the SMAD2/SMAD4 complex, and exported out of the nucleus by interaction with RANBP1 (PubMed:16751101, PubMed:19289081). Co-localizes with LEMD3 at the nucleus inner membrane (PubMed:15601644). MAPK-mediated phosphorylation appears to have no effect on nuclear import (PubMed:19218245). PDPK1 prevents its nuclear translocation in response to TGF-beta (PubMed:17327236). Localized mainly to the nucleus in the early stages of embryo development with expression becoming evident in the cytoplasm of the inner cell mass at the blastocyst stage (By similarity).</text>
</comment>
<comment type="alternative products">
    <event type="alternative splicing"/>
    <isoform>
        <id>P84022-1</id>
        <name>1</name>
        <sequence type="displayed"/>
    </isoform>
    <isoform>
        <id>P84022-2</id>
        <name>2</name>
        <sequence type="described" ref="VSP_042900"/>
    </isoform>
    <isoform>
        <id>P84022-3</id>
        <name>3</name>
        <sequence type="described" ref="VSP_043793"/>
    </isoform>
    <isoform>
        <id>P84022-4</id>
        <name>4</name>
        <sequence type="described" ref="VSP_045348"/>
    </isoform>
</comment>
<comment type="domain">
    <text>The MH1 domain is required for DNA binding. Also binds zinc ions which are necessary for the DNA binding.</text>
</comment>
<comment type="domain">
    <text>The MH2 domain is required for both homomeric and heteromeric interactions and for transcriptional regulation. Sufficient for nuclear import.</text>
</comment>
<comment type="domain">
    <text>The linker region is required for the TGFbeta-mediated transcriptional activity and acts synergistically with the MH2 domain.</text>
</comment>
<comment type="PTM">
    <text evidence="7 16 19 24 34 37 39 47 55 60">Phosphorylated on serine and threonine residues. Enhanced phosphorylation in the linker region on Thr-179, Ser-204 and Ser-208 on EGF and TGF-beta treatment. Ser-208 is the main site of MAPK-mediated phosphorylation. CDK-mediated phosphorylation occurs in a cell-cycle dependent manner and inhibits both the transcriptional activity and antiproliferative functions of SMAD3. This phosphorylation is inhibited by flavopiridol. Maximum phosphorylation at the G(1)/S junction. Also phosphorylated on serine residues in the C-terminal SXS motif by TGFBR1 and ACVR1. TGFBR1-mediated phosphorylation at these C-terminal sites is required for interaction with SMAD4, nuclear location and transactivational activity, and appears to be a prerequisite for the TGF-beta mediated phosphorylation in the linker region. Dephosphorylated in the C-terminal SXS motif by PPM1A. This dephosphorylation disrupts the interaction with SMAD4, promotes nuclear export and terminates TGF-beta-mediated signaling. Phosphorylation at Ser-418 by CSNK1G2/CK1 promotes ligand-dependent ubiquitination and subsequent proteasome degradation, thus inhibiting SMAD3-mediated TGF-beta responses. Phosphorylated by PDPK1.</text>
</comment>
<comment type="PTM">
    <text evidence="30">Acetylation in the nucleus by EP300 in the MH2 domain regulates positively its transcriptional activity and is enhanced by TGF-beta.</text>
</comment>
<comment type="PTM">
    <text evidence="53">Poly-ADP-ribosylated by PARP1 and PARP2. ADP-ribosylation negatively regulates SMAD3 transcriptional responses during the course of TGF-beta signaling.</text>
</comment>
<comment type="PTM">
    <text evidence="2 47 50">Ubiquitinated. Monoubiquitinated, leading to prevent DNA-binding (PubMed:21947082). Deubiquitination by USP15 alleviates inhibition and promotes activation of TGF-beta target genes (PubMed:21947082). Ubiquitinated by RNF111, leading to its degradation: only SMAD3 proteins that are 'in use' are targeted by RNF111, RNF111 playing a key role in activating SMAD3 and regulating its turnover (By similarity). Undergoes STUB1-mediated ubiquitination and degradation (PubMed:24613385).</text>
</comment>
<comment type="disease" evidence="31">
    <disease id="DI-01359">
        <name>Colorectal cancer</name>
        <acronym>CRC</acronym>
        <description>A complex disease characterized by malignant lesions arising from the inner wall of the large intestine (the colon) and the rectum. Genetic alterations are often associated with progression from premalignant lesion (adenoma) to invasive adenocarcinoma. Risk factors for cancer of the colon and rectum include colon polyps, long-standing ulcerative colitis, and genetic family history.</description>
        <dbReference type="MIM" id="114500"/>
    </disease>
    <text>The disease may be caused by variants affecting the gene represented in this entry.</text>
</comment>
<comment type="disease" evidence="45 46">
    <disease id="DI-03064">
        <name>Loeys-Dietz syndrome 3</name>
        <acronym>LDS3</acronym>
        <description>An aortic aneurysm syndrome with widespread systemic involvement. The disorder is characterized by the triad of arterial tortuosity and aneurysms, hypertelorism, and bifid uvula or cleft palate. Patients with LDS3 also manifest early-onset osteoarthritis. They lack craniosynostosis and intellectual disability.</description>
        <dbReference type="MIM" id="613795"/>
    </disease>
    <text evidence="46">The disease is caused by variants affecting the gene represented in this entry. SMAD3 mutations have been reported to be also associated with thoracic aortic aneurysms and dissection (TAAD) (PubMed:21778426). This phenotype is distinguised from LDS3 by having aneurysms restricted to thoracic aorta. As individuals carrying these mutations also exhibit aneurysms of other arteries, including abdominal aorta, iliac, and/or intracranial arteries (PubMed:21778426), they have been classified as LDS3 by the OMIM resource.</text>
</comment>
<comment type="similarity">
    <text evidence="64">Belongs to the dwarfin/SMAD family.</text>
</comment>
<dbReference type="EMBL" id="U68019">
    <property type="protein sequence ID" value="AAB80960.1"/>
    <property type="molecule type" value="mRNA"/>
</dbReference>
<dbReference type="EMBL" id="U76622">
    <property type="protein sequence ID" value="AAB18967.1"/>
    <property type="molecule type" value="mRNA"/>
</dbReference>
<dbReference type="EMBL" id="AB004930">
    <property type="protein sequence ID" value="BAA22032.1"/>
    <property type="molecule type" value="Genomic_DNA"/>
</dbReference>
<dbReference type="EMBL" id="AF025300">
    <property type="protein sequence ID" value="AAL68976.1"/>
    <property type="molecule type" value="Genomic_DNA"/>
</dbReference>
<dbReference type="EMBL" id="AF025293">
    <property type="protein sequence ID" value="AAL68976.1"/>
    <property type="status" value="JOINED"/>
    <property type="molecule type" value="Genomic_DNA"/>
</dbReference>
<dbReference type="EMBL" id="AF025294">
    <property type="protein sequence ID" value="AAL68976.1"/>
    <property type="status" value="JOINED"/>
    <property type="molecule type" value="Genomic_DNA"/>
</dbReference>
<dbReference type="EMBL" id="AF025295">
    <property type="protein sequence ID" value="AAL68976.1"/>
    <property type="status" value="JOINED"/>
    <property type="molecule type" value="Genomic_DNA"/>
</dbReference>
<dbReference type="EMBL" id="AF025296">
    <property type="protein sequence ID" value="AAL68976.1"/>
    <property type="status" value="JOINED"/>
    <property type="molecule type" value="Genomic_DNA"/>
</dbReference>
<dbReference type="EMBL" id="AF025297">
    <property type="protein sequence ID" value="AAL68976.1"/>
    <property type="status" value="JOINED"/>
    <property type="molecule type" value="Genomic_DNA"/>
</dbReference>
<dbReference type="EMBL" id="AF025298">
    <property type="protein sequence ID" value="AAL68976.1"/>
    <property type="status" value="JOINED"/>
    <property type="molecule type" value="Genomic_DNA"/>
</dbReference>
<dbReference type="EMBL" id="AF025299">
    <property type="protein sequence ID" value="AAL68976.1"/>
    <property type="status" value="JOINED"/>
    <property type="molecule type" value="Genomic_DNA"/>
</dbReference>
<dbReference type="EMBL" id="AK290881">
    <property type="protein sequence ID" value="BAF83570.1"/>
    <property type="molecule type" value="mRNA"/>
</dbReference>
<dbReference type="EMBL" id="AK298139">
    <property type="protein sequence ID" value="BAH12731.1"/>
    <property type="molecule type" value="mRNA"/>
</dbReference>
<dbReference type="EMBL" id="AK300614">
    <property type="protein sequence ID" value="BAH13315.1"/>
    <property type="molecule type" value="mRNA"/>
</dbReference>
<dbReference type="EMBL" id="AK316017">
    <property type="protein sequence ID" value="BAH14388.1"/>
    <property type="molecule type" value="mRNA"/>
</dbReference>
<dbReference type="EMBL" id="AC012568">
    <property type="status" value="NOT_ANNOTATED_CDS"/>
    <property type="molecule type" value="Genomic_DNA"/>
</dbReference>
<dbReference type="EMBL" id="AC087482">
    <property type="status" value="NOT_ANNOTATED_CDS"/>
    <property type="molecule type" value="Genomic_DNA"/>
</dbReference>
<dbReference type="EMBL" id="CH471082">
    <property type="protein sequence ID" value="EAW77788.1"/>
    <property type="molecule type" value="Genomic_DNA"/>
</dbReference>
<dbReference type="EMBL" id="BC050743">
    <property type="protein sequence ID" value="AAH50743.1"/>
    <property type="molecule type" value="mRNA"/>
</dbReference>
<dbReference type="CCDS" id="CCDS10222.1">
    <molecule id="P84022-1"/>
</dbReference>
<dbReference type="CCDS" id="CCDS45288.1">
    <molecule id="P84022-2"/>
</dbReference>
<dbReference type="CCDS" id="CCDS53950.1">
    <molecule id="P84022-3"/>
</dbReference>
<dbReference type="CCDS" id="CCDS53951.1">
    <molecule id="P84022-4"/>
</dbReference>
<dbReference type="PIR" id="S71798">
    <property type="entry name" value="S71798"/>
</dbReference>
<dbReference type="RefSeq" id="NP_001138574.1">
    <molecule id="P84022-3"/>
    <property type="nucleotide sequence ID" value="NM_001145102.2"/>
</dbReference>
<dbReference type="RefSeq" id="NP_001138575.1">
    <molecule id="P84022-2"/>
    <property type="nucleotide sequence ID" value="NM_001145103.2"/>
</dbReference>
<dbReference type="RefSeq" id="NP_001138576.1">
    <molecule id="P84022-4"/>
    <property type="nucleotide sequence ID" value="NM_001145104.2"/>
</dbReference>
<dbReference type="RefSeq" id="NP_001393945.1">
    <molecule id="P84022-3"/>
    <property type="nucleotide sequence ID" value="NM_001407016.1"/>
</dbReference>
<dbReference type="RefSeq" id="NP_001393946.1">
    <molecule id="P84022-4"/>
    <property type="nucleotide sequence ID" value="NM_001407017.1"/>
</dbReference>
<dbReference type="RefSeq" id="NP_005893.1">
    <molecule id="P84022-1"/>
    <property type="nucleotide sequence ID" value="NM_005902.4"/>
</dbReference>
<dbReference type="RefSeq" id="XP_054233890.1">
    <molecule id="P84022-3"/>
    <property type="nucleotide sequence ID" value="XM_054377915.1"/>
</dbReference>
<dbReference type="PDB" id="1MHD">
    <property type="method" value="X-ray"/>
    <property type="resolution" value="2.80 A"/>
    <property type="chains" value="A/B=1-132"/>
</dbReference>
<dbReference type="PDB" id="1MJS">
    <property type="method" value="X-ray"/>
    <property type="resolution" value="1.91 A"/>
    <property type="chains" value="A=229-425"/>
</dbReference>
<dbReference type="PDB" id="1MK2">
    <property type="method" value="X-ray"/>
    <property type="resolution" value="2.74 A"/>
    <property type="chains" value="A=220-425"/>
</dbReference>
<dbReference type="PDB" id="1OZJ">
    <property type="method" value="X-ray"/>
    <property type="resolution" value="2.40 A"/>
    <property type="chains" value="A/B=1-144"/>
</dbReference>
<dbReference type="PDB" id="1U7F">
    <property type="method" value="X-ray"/>
    <property type="resolution" value="2.60 A"/>
    <property type="chains" value="A/C=228-425"/>
</dbReference>
<dbReference type="PDB" id="2LAJ">
    <property type="method" value="NMR"/>
    <property type="chains" value="B=202-211"/>
</dbReference>
<dbReference type="PDB" id="2LB2">
    <property type="method" value="NMR"/>
    <property type="chains" value="B=178-189"/>
</dbReference>
<dbReference type="PDB" id="5OD6">
    <property type="method" value="X-ray"/>
    <property type="resolution" value="2.00 A"/>
    <property type="chains" value="A/B=11-135"/>
</dbReference>
<dbReference type="PDB" id="5ODG">
    <property type="method" value="X-ray"/>
    <property type="resolution" value="2.12 A"/>
    <property type="chains" value="A/B=11-135"/>
</dbReference>
<dbReference type="PDB" id="5XOC">
    <property type="method" value="X-ray"/>
    <property type="resolution" value="2.40 A"/>
    <property type="chains" value="A=220-416"/>
</dbReference>
<dbReference type="PDB" id="6YIB">
    <property type="method" value="X-ray"/>
    <property type="resolution" value="1.70 A"/>
    <property type="chains" value="P=417-425"/>
</dbReference>
<dbReference type="PDB" id="6ZMN">
    <property type="method" value="X-ray"/>
    <property type="resolution" value="2.33 A"/>
    <property type="chains" value="A/B=10-136"/>
</dbReference>
<dbReference type="PDBsum" id="1MHD"/>
<dbReference type="PDBsum" id="1MJS"/>
<dbReference type="PDBsum" id="1MK2"/>
<dbReference type="PDBsum" id="1OZJ"/>
<dbReference type="PDBsum" id="1U7F"/>
<dbReference type="PDBsum" id="2LAJ"/>
<dbReference type="PDBsum" id="2LB2"/>
<dbReference type="PDBsum" id="5OD6"/>
<dbReference type="PDBsum" id="5ODG"/>
<dbReference type="PDBsum" id="5XOC"/>
<dbReference type="PDBsum" id="6YIB"/>
<dbReference type="PDBsum" id="6ZMN"/>
<dbReference type="SMR" id="P84022"/>
<dbReference type="BioGRID" id="110263">
    <property type="interactions" value="425"/>
</dbReference>
<dbReference type="ComplexPortal" id="CPX-1">
    <property type="entry name" value="SMAD2-SMAD3-SMAD4 complex"/>
</dbReference>
<dbReference type="ComplexPortal" id="CPX-10345">
    <property type="entry name" value="IL37-SMAD3 transcriptional repressor complex"/>
</dbReference>
<dbReference type="ComplexPortal" id="CPX-12">
    <property type="entry name" value="SMAD3 homotrimer"/>
</dbReference>
<dbReference type="ComplexPortal" id="CPX-3252">
    <property type="entry name" value="SMAD3-SMAD4 complex"/>
</dbReference>
<dbReference type="ComplexPortal" id="CPX-6062">
    <property type="entry name" value="SMAD3-TTF-1 complex"/>
</dbReference>
<dbReference type="CORUM" id="P84022"/>
<dbReference type="DIP" id="DIP-29720N"/>
<dbReference type="FunCoup" id="P84022">
    <property type="interactions" value="2136"/>
</dbReference>
<dbReference type="IntAct" id="P84022">
    <property type="interactions" value="222"/>
</dbReference>
<dbReference type="MINT" id="P84022"/>
<dbReference type="STRING" id="9606.ENSP00000332973"/>
<dbReference type="BindingDB" id="P84022"/>
<dbReference type="ChEMBL" id="CHEMBL1293258"/>
<dbReference type="MoonDB" id="P84022">
    <property type="type" value="Predicted"/>
</dbReference>
<dbReference type="GlyGen" id="P84022">
    <property type="glycosylation" value="1 site, 1 O-linked glycan (1 site)"/>
</dbReference>
<dbReference type="iPTMnet" id="P84022"/>
<dbReference type="PhosphoSitePlus" id="P84022"/>
<dbReference type="SwissPalm" id="P84022"/>
<dbReference type="BioMuta" id="SMAD3"/>
<dbReference type="DMDM" id="51338669"/>
<dbReference type="jPOST" id="P84022"/>
<dbReference type="MassIVE" id="P84022"/>
<dbReference type="PaxDb" id="9606-ENSP00000332973"/>
<dbReference type="PeptideAtlas" id="P84022"/>
<dbReference type="ProteomicsDB" id="26192"/>
<dbReference type="ProteomicsDB" id="57743">
    <molecule id="P84022-1"/>
</dbReference>
<dbReference type="ProteomicsDB" id="57744">
    <molecule id="P84022-2"/>
</dbReference>
<dbReference type="ProteomicsDB" id="57745">
    <molecule id="P84022-3"/>
</dbReference>
<dbReference type="Pumba" id="P84022"/>
<dbReference type="ABCD" id="P84022">
    <property type="antibodies" value="2 sequenced antibodies"/>
</dbReference>
<dbReference type="Antibodypedia" id="26224">
    <property type="antibodies" value="2321 antibodies from 45 providers"/>
</dbReference>
<dbReference type="DNASU" id="4088"/>
<dbReference type="Ensembl" id="ENST00000327367.9">
    <molecule id="P84022-1"/>
    <property type="protein sequence ID" value="ENSP00000332973.4"/>
    <property type="gene ID" value="ENSG00000166949.18"/>
</dbReference>
<dbReference type="Ensembl" id="ENST00000439724.7">
    <molecule id="P84022-2"/>
    <property type="protein sequence ID" value="ENSP00000401133.3"/>
    <property type="gene ID" value="ENSG00000166949.18"/>
</dbReference>
<dbReference type="Ensembl" id="ENST00000537194.6">
    <molecule id="P84022-4"/>
    <property type="protein sequence ID" value="ENSP00000445348.2"/>
    <property type="gene ID" value="ENSG00000166949.18"/>
</dbReference>
<dbReference type="Ensembl" id="ENST00000540846.6">
    <molecule id="P84022-3"/>
    <property type="protein sequence ID" value="ENSP00000437757.2"/>
    <property type="gene ID" value="ENSG00000166949.18"/>
</dbReference>
<dbReference type="Ensembl" id="ENST00000558428.6">
    <molecule id="P84022-4"/>
    <property type="protein sequence ID" value="ENSP00000454165.2"/>
    <property type="gene ID" value="ENSG00000166949.18"/>
</dbReference>
<dbReference type="Ensembl" id="ENST00000558739.2">
    <molecule id="P84022-3"/>
    <property type="protein sequence ID" value="ENSP00000453684.2"/>
    <property type="gene ID" value="ENSG00000166949.18"/>
</dbReference>
<dbReference type="Ensembl" id="ENST00000558827.2">
    <molecule id="P84022-4"/>
    <property type="protein sequence ID" value="ENSP00000452767.2"/>
    <property type="gene ID" value="ENSG00000166949.18"/>
</dbReference>
<dbReference type="Ensembl" id="ENST00000559460.6">
    <molecule id="P84022-3"/>
    <property type="protein sequence ID" value="ENSP00000453082.2"/>
    <property type="gene ID" value="ENSG00000166949.18"/>
</dbReference>
<dbReference type="Ensembl" id="ENST00000679624.1">
    <molecule id="P84022-3"/>
    <property type="protein sequence ID" value="ENSP00000505445.1"/>
    <property type="gene ID" value="ENSG00000166949.18"/>
</dbReference>
<dbReference type="Ensembl" id="ENST00000681239.1">
    <molecule id="P84022-3"/>
    <property type="protein sequence ID" value="ENSP00000505641.1"/>
    <property type="gene ID" value="ENSG00000166949.18"/>
</dbReference>
<dbReference type="GeneID" id="4088"/>
<dbReference type="KEGG" id="hsa:4088"/>
<dbReference type="MANE-Select" id="ENST00000327367.9">
    <property type="protein sequence ID" value="ENSP00000332973.4"/>
    <property type="RefSeq nucleotide sequence ID" value="NM_005902.4"/>
    <property type="RefSeq protein sequence ID" value="NP_005893.1"/>
</dbReference>
<dbReference type="UCSC" id="uc002aqj.4">
    <molecule id="P84022-1"/>
    <property type="organism name" value="human"/>
</dbReference>
<dbReference type="AGR" id="HGNC:6769"/>
<dbReference type="CTD" id="4088"/>
<dbReference type="DisGeNET" id="4088"/>
<dbReference type="GeneCards" id="SMAD3"/>
<dbReference type="GeneReviews" id="SMAD3"/>
<dbReference type="HGNC" id="HGNC:6769">
    <property type="gene designation" value="SMAD3"/>
</dbReference>
<dbReference type="HPA" id="ENSG00000166949">
    <property type="expression patterns" value="Low tissue specificity"/>
</dbReference>
<dbReference type="MalaCards" id="SMAD3"/>
<dbReference type="MIM" id="114500">
    <property type="type" value="phenotype"/>
</dbReference>
<dbReference type="MIM" id="603109">
    <property type="type" value="gene"/>
</dbReference>
<dbReference type="MIM" id="613795">
    <property type="type" value="phenotype"/>
</dbReference>
<dbReference type="neXtProt" id="NX_P84022"/>
<dbReference type="OpenTargets" id="ENSG00000166949"/>
<dbReference type="Orphanet" id="284984">
    <property type="disease" value="Aneurysm-osteoarthritis syndrome"/>
</dbReference>
<dbReference type="Orphanet" id="91387">
    <property type="disease" value="Familial thoracic aortic aneurysm and aortic dissection"/>
</dbReference>
<dbReference type="Orphanet" id="60030">
    <property type="disease" value="Loeys-Dietz syndrome"/>
</dbReference>
<dbReference type="PharmGKB" id="PA30526"/>
<dbReference type="VEuPathDB" id="HostDB:ENSG00000166949"/>
<dbReference type="eggNOG" id="KOG3701">
    <property type="taxonomic scope" value="Eukaryota"/>
</dbReference>
<dbReference type="GeneTree" id="ENSGT00940000153499"/>
<dbReference type="HOGENOM" id="CLU_026736_0_0_1"/>
<dbReference type="InParanoid" id="P84022"/>
<dbReference type="OMA" id="VENCRYS"/>
<dbReference type="OrthoDB" id="5794312at2759"/>
<dbReference type="PAN-GO" id="P84022">
    <property type="GO annotations" value="10 GO annotations based on evolutionary models"/>
</dbReference>
<dbReference type="PhylomeDB" id="P84022"/>
<dbReference type="TreeFam" id="TF314923"/>
<dbReference type="PathwayCommons" id="P84022"/>
<dbReference type="Reactome" id="R-HSA-1181150">
    <property type="pathway name" value="Signaling by NODAL"/>
</dbReference>
<dbReference type="Reactome" id="R-HSA-1502540">
    <property type="pathway name" value="Signaling by Activin"/>
</dbReference>
<dbReference type="Reactome" id="R-HSA-2173788">
    <property type="pathway name" value="Downregulation of TGF-beta receptor signaling"/>
</dbReference>
<dbReference type="Reactome" id="R-HSA-2173789">
    <property type="pathway name" value="TGF-beta receptor signaling activates SMADs"/>
</dbReference>
<dbReference type="Reactome" id="R-HSA-2173795">
    <property type="pathway name" value="Downregulation of SMAD2/3:SMAD4 transcriptional activity"/>
</dbReference>
<dbReference type="Reactome" id="R-HSA-2173796">
    <property type="pathway name" value="SMAD2/SMAD3:SMAD4 heterotrimer regulates transcription"/>
</dbReference>
<dbReference type="Reactome" id="R-HSA-3304356">
    <property type="pathway name" value="SMAD2/3 Phosphorylation Motif Mutants in Cancer"/>
</dbReference>
<dbReference type="Reactome" id="R-HSA-3311021">
    <property type="pathway name" value="SMAD4 MH2 Domain Mutants in Cancer"/>
</dbReference>
<dbReference type="Reactome" id="R-HSA-3315487">
    <property type="pathway name" value="SMAD2/3 MH2 Domain Mutants in Cancer"/>
</dbReference>
<dbReference type="Reactome" id="R-HSA-3656532">
    <property type="pathway name" value="TGFBR1 KD Mutants in Cancer"/>
</dbReference>
<dbReference type="Reactome" id="R-HSA-5689880">
    <property type="pathway name" value="Ub-specific processing proteases"/>
</dbReference>
<dbReference type="Reactome" id="R-HSA-8941855">
    <property type="pathway name" value="RUNX3 regulates CDKN1A transcription"/>
</dbReference>
<dbReference type="Reactome" id="R-HSA-8952158">
    <property type="pathway name" value="RUNX3 regulates BCL2L11 (BIM) transcription"/>
</dbReference>
<dbReference type="Reactome" id="R-HSA-9008059">
    <property type="pathway name" value="Interleukin-37 signaling"/>
</dbReference>
<dbReference type="Reactome" id="R-HSA-9013695">
    <property type="pathway name" value="NOTCH4 Intracellular Domain Regulates Transcription"/>
</dbReference>
<dbReference type="Reactome" id="R-HSA-9615017">
    <property type="pathway name" value="FOXO-mediated transcription of oxidative stress, metabolic and neuronal genes"/>
</dbReference>
<dbReference type="Reactome" id="R-HSA-9617828">
    <property type="pathway name" value="FOXO-mediated transcription of cell cycle genes"/>
</dbReference>
<dbReference type="Reactome" id="R-HSA-9735871">
    <property type="pathway name" value="SARS-CoV-1 targets host intracellular signalling and regulatory pathways"/>
</dbReference>
<dbReference type="Reactome" id="R-HSA-9754189">
    <property type="pathway name" value="Germ layer formation at gastrulation"/>
</dbReference>
<dbReference type="Reactome" id="R-HSA-9796292">
    <property type="pathway name" value="Formation of axial mesoderm"/>
</dbReference>
<dbReference type="Reactome" id="R-HSA-9823730">
    <property type="pathway name" value="Formation of definitive endoderm"/>
</dbReference>
<dbReference type="Reactome" id="R-HSA-9839394">
    <property type="pathway name" value="TGFBR3 expression"/>
</dbReference>
<dbReference type="SignaLink" id="P84022"/>
<dbReference type="SIGNOR" id="P84022"/>
<dbReference type="BioGRID-ORCS" id="4088">
    <property type="hits" value="18 hits in 1191 CRISPR screens"/>
</dbReference>
<dbReference type="CD-CODE" id="38EC0B30">
    <property type="entry name" value="Transcriptional condensate"/>
</dbReference>
<dbReference type="CD-CODE" id="804901D1">
    <property type="entry name" value="Nuclear speckle"/>
</dbReference>
<dbReference type="ChiTaRS" id="SMAD3">
    <property type="organism name" value="human"/>
</dbReference>
<dbReference type="EvolutionaryTrace" id="P84022"/>
<dbReference type="GeneWiki" id="Mothers_against_decapentaplegic_homolog_3"/>
<dbReference type="GenomeRNAi" id="4088"/>
<dbReference type="Pharos" id="P84022">
    <property type="development level" value="Tchem"/>
</dbReference>
<dbReference type="PRO" id="PR:P84022"/>
<dbReference type="Proteomes" id="UP000005640">
    <property type="component" value="Chromosome 15"/>
</dbReference>
<dbReference type="RNAct" id="P84022">
    <property type="molecule type" value="protein"/>
</dbReference>
<dbReference type="Bgee" id="ENSG00000166949">
    <property type="expression patterns" value="Expressed in tendon of biceps brachii and 204 other cell types or tissues"/>
</dbReference>
<dbReference type="ExpressionAtlas" id="P84022">
    <property type="expression patterns" value="baseline and differential"/>
</dbReference>
<dbReference type="GO" id="GO:0000785">
    <property type="term" value="C:chromatin"/>
    <property type="evidence" value="ECO:0000314"/>
    <property type="project" value="BHF-UCL"/>
</dbReference>
<dbReference type="GO" id="GO:0036064">
    <property type="term" value="C:ciliary basal body"/>
    <property type="evidence" value="ECO:0000314"/>
    <property type="project" value="HPA"/>
</dbReference>
<dbReference type="GO" id="GO:0005737">
    <property type="term" value="C:cytoplasm"/>
    <property type="evidence" value="ECO:0000314"/>
    <property type="project" value="UniProtKB"/>
</dbReference>
<dbReference type="GO" id="GO:0005829">
    <property type="term" value="C:cytosol"/>
    <property type="evidence" value="ECO:0000316"/>
    <property type="project" value="ARUK-UCL"/>
</dbReference>
<dbReference type="GO" id="GO:0071144">
    <property type="term" value="C:heteromeric SMAD protein complex"/>
    <property type="evidence" value="ECO:0000314"/>
    <property type="project" value="BHF-UCL"/>
</dbReference>
<dbReference type="GO" id="GO:0043231">
    <property type="term" value="C:intracellular membrane-bounded organelle"/>
    <property type="evidence" value="ECO:0000314"/>
    <property type="project" value="HPA"/>
</dbReference>
<dbReference type="GO" id="GO:0005637">
    <property type="term" value="C:nuclear inner membrane"/>
    <property type="evidence" value="ECO:0000314"/>
    <property type="project" value="UniProtKB"/>
</dbReference>
<dbReference type="GO" id="GO:0005654">
    <property type="term" value="C:nucleoplasm"/>
    <property type="evidence" value="ECO:0000314"/>
    <property type="project" value="HPA"/>
</dbReference>
<dbReference type="GO" id="GO:0005634">
    <property type="term" value="C:nucleus"/>
    <property type="evidence" value="ECO:0000314"/>
    <property type="project" value="UniProtKB"/>
</dbReference>
<dbReference type="GO" id="GO:0005886">
    <property type="term" value="C:plasma membrane"/>
    <property type="evidence" value="ECO:0007669"/>
    <property type="project" value="Ensembl"/>
</dbReference>
<dbReference type="GO" id="GO:0043235">
    <property type="term" value="C:receptor complex"/>
    <property type="evidence" value="ECO:0000315"/>
    <property type="project" value="BHF-UCL"/>
</dbReference>
<dbReference type="GO" id="GO:0071141">
    <property type="term" value="C:SMAD protein complex"/>
    <property type="evidence" value="ECO:0000314"/>
    <property type="project" value="UniProtKB"/>
</dbReference>
<dbReference type="GO" id="GO:0005667">
    <property type="term" value="C:transcription regulator complex"/>
    <property type="evidence" value="ECO:0000314"/>
    <property type="project" value="UniProtKB"/>
</dbReference>
<dbReference type="GO" id="GO:0008013">
    <property type="term" value="F:beta-catenin binding"/>
    <property type="evidence" value="ECO:0007669"/>
    <property type="project" value="Ensembl"/>
</dbReference>
<dbReference type="GO" id="GO:0043425">
    <property type="term" value="F:bHLH transcription factor binding"/>
    <property type="evidence" value="ECO:0000353"/>
    <property type="project" value="BHF-UCL"/>
</dbReference>
<dbReference type="GO" id="GO:0031490">
    <property type="term" value="F:chromatin DNA binding"/>
    <property type="evidence" value="ECO:0007669"/>
    <property type="project" value="Ensembl"/>
</dbReference>
<dbReference type="GO" id="GO:0000987">
    <property type="term" value="F:cis-regulatory region sequence-specific DNA binding"/>
    <property type="evidence" value="ECO:0000314"/>
    <property type="project" value="UniProtKB"/>
</dbReference>
<dbReference type="GO" id="GO:0070410">
    <property type="term" value="F:co-SMAD binding"/>
    <property type="evidence" value="ECO:0000353"/>
    <property type="project" value="BHF-UCL"/>
</dbReference>
<dbReference type="GO" id="GO:0005518">
    <property type="term" value="F:collagen binding"/>
    <property type="evidence" value="ECO:0007669"/>
    <property type="project" value="Ensembl"/>
</dbReference>
<dbReference type="GO" id="GO:0017151">
    <property type="term" value="F:DEAD/H-box RNA helicase binding"/>
    <property type="evidence" value="ECO:0000353"/>
    <property type="project" value="BHF-UCL"/>
</dbReference>
<dbReference type="GO" id="GO:0003677">
    <property type="term" value="F:DNA binding"/>
    <property type="evidence" value="ECO:0000314"/>
    <property type="project" value="ARUK-UCL"/>
</dbReference>
<dbReference type="GO" id="GO:0001228">
    <property type="term" value="F:DNA-binding transcription activator activity, RNA polymerase II-specific"/>
    <property type="evidence" value="ECO:0000314"/>
    <property type="project" value="BHF-UCL"/>
</dbReference>
<dbReference type="GO" id="GO:0003700">
    <property type="term" value="F:DNA-binding transcription factor activity"/>
    <property type="evidence" value="ECO:0000314"/>
    <property type="project" value="UniProtKB"/>
</dbReference>
<dbReference type="GO" id="GO:0000981">
    <property type="term" value="F:DNA-binding transcription factor activity, RNA polymerase II-specific"/>
    <property type="evidence" value="ECO:0000314"/>
    <property type="project" value="NTNU_SB"/>
</dbReference>
<dbReference type="GO" id="GO:0140297">
    <property type="term" value="F:DNA-binding transcription factor binding"/>
    <property type="evidence" value="ECO:0000353"/>
    <property type="project" value="BHF-UCL"/>
</dbReference>
<dbReference type="GO" id="GO:0001217">
    <property type="term" value="F:DNA-binding transcription repressor activity"/>
    <property type="evidence" value="ECO:0000314"/>
    <property type="project" value="ARUK-UCL"/>
</dbReference>
<dbReference type="GO" id="GO:0070411">
    <property type="term" value="F:I-SMAD binding"/>
    <property type="evidence" value="ECO:0000318"/>
    <property type="project" value="GO_Central"/>
</dbReference>
<dbReference type="GO" id="GO:0042802">
    <property type="term" value="F:identical protein binding"/>
    <property type="evidence" value="ECO:0000353"/>
    <property type="project" value="IntAct"/>
</dbReference>
<dbReference type="GO" id="GO:0035259">
    <property type="term" value="F:nuclear glucocorticoid receptor binding"/>
    <property type="evidence" value="ECO:0000353"/>
    <property type="project" value="CAFA"/>
</dbReference>
<dbReference type="GO" id="GO:0031962">
    <property type="term" value="F:nuclear mineralocorticoid receptor binding"/>
    <property type="evidence" value="ECO:0000353"/>
    <property type="project" value="CAFA"/>
</dbReference>
<dbReference type="GO" id="GO:0016922">
    <property type="term" value="F:nuclear receptor binding"/>
    <property type="evidence" value="ECO:0000353"/>
    <property type="project" value="BHF-UCL"/>
</dbReference>
<dbReference type="GO" id="GO:0019902">
    <property type="term" value="F:phosphatase binding"/>
    <property type="evidence" value="ECO:0000353"/>
    <property type="project" value="UniProtKB"/>
</dbReference>
<dbReference type="GO" id="GO:1990841">
    <property type="term" value="F:promoter-specific chromatin binding"/>
    <property type="evidence" value="ECO:0007669"/>
    <property type="project" value="Ensembl"/>
</dbReference>
<dbReference type="GO" id="GO:0042803">
    <property type="term" value="F:protein homodimerization activity"/>
    <property type="evidence" value="ECO:0000353"/>
    <property type="project" value="BHF-UCL"/>
</dbReference>
<dbReference type="GO" id="GO:0019901">
    <property type="term" value="F:protein kinase binding"/>
    <property type="evidence" value="ECO:0000353"/>
    <property type="project" value="UniProtKB"/>
</dbReference>
<dbReference type="GO" id="GO:0070412">
    <property type="term" value="F:R-SMAD binding"/>
    <property type="evidence" value="ECO:0000353"/>
    <property type="project" value="UniProtKB"/>
</dbReference>
<dbReference type="GO" id="GO:0000978">
    <property type="term" value="F:RNA polymerase II cis-regulatory region sequence-specific DNA binding"/>
    <property type="evidence" value="ECO:0000314"/>
    <property type="project" value="GO_Central"/>
</dbReference>
<dbReference type="GO" id="GO:0061629">
    <property type="term" value="F:RNA polymerase II-specific DNA-binding transcription factor binding"/>
    <property type="evidence" value="ECO:0000353"/>
    <property type="project" value="BHF-UCL"/>
</dbReference>
<dbReference type="GO" id="GO:0043565">
    <property type="term" value="F:sequence-specific DNA binding"/>
    <property type="evidence" value="ECO:0000314"/>
    <property type="project" value="BHF-UCL"/>
</dbReference>
<dbReference type="GO" id="GO:0032810">
    <property type="term" value="F:sterol response element binding"/>
    <property type="evidence" value="ECO:0000316"/>
    <property type="project" value="ARUK-UCL"/>
</dbReference>
<dbReference type="GO" id="GO:0000976">
    <property type="term" value="F:transcription cis-regulatory region binding"/>
    <property type="evidence" value="ECO:0000314"/>
    <property type="project" value="BHF-UCL"/>
</dbReference>
<dbReference type="GO" id="GO:0001223">
    <property type="term" value="F:transcription coactivator binding"/>
    <property type="evidence" value="ECO:0000353"/>
    <property type="project" value="UniProtKB"/>
</dbReference>
<dbReference type="GO" id="GO:0001222">
    <property type="term" value="F:transcription corepressor binding"/>
    <property type="evidence" value="ECO:0000353"/>
    <property type="project" value="HGNC-UCL"/>
</dbReference>
<dbReference type="GO" id="GO:0005160">
    <property type="term" value="F:transforming growth factor beta receptor binding"/>
    <property type="evidence" value="ECO:0000353"/>
    <property type="project" value="BHF-UCL"/>
</dbReference>
<dbReference type="GO" id="GO:0043130">
    <property type="term" value="F:ubiquitin binding"/>
    <property type="evidence" value="ECO:0000314"/>
    <property type="project" value="UniProtKB"/>
</dbReference>
<dbReference type="GO" id="GO:0031625">
    <property type="term" value="F:ubiquitin protein ligase binding"/>
    <property type="evidence" value="ECO:0000353"/>
    <property type="project" value="BHF-UCL"/>
</dbReference>
<dbReference type="GO" id="GO:0008270">
    <property type="term" value="F:zinc ion binding"/>
    <property type="evidence" value="ECO:0000314"/>
    <property type="project" value="UniProtKB"/>
</dbReference>
<dbReference type="GO" id="GO:0032924">
    <property type="term" value="P:activin receptor signaling pathway"/>
    <property type="evidence" value="ECO:0000315"/>
    <property type="project" value="BHF-UCL"/>
</dbReference>
<dbReference type="GO" id="GO:0030325">
    <property type="term" value="P:adrenal gland development"/>
    <property type="evidence" value="ECO:0007669"/>
    <property type="project" value="Ensembl"/>
</dbReference>
<dbReference type="GO" id="GO:0009653">
    <property type="term" value="P:anatomical structure morphogenesis"/>
    <property type="evidence" value="ECO:0000318"/>
    <property type="project" value="GO_Central"/>
</dbReference>
<dbReference type="GO" id="GO:0097190">
    <property type="term" value="P:apoptotic signaling pathway"/>
    <property type="evidence" value="ECO:0000315"/>
    <property type="project" value="BHF-UCL"/>
</dbReference>
<dbReference type="GO" id="GO:0030154">
    <property type="term" value="P:cell differentiation"/>
    <property type="evidence" value="ECO:0000318"/>
    <property type="project" value="GO_Central"/>
</dbReference>
<dbReference type="GO" id="GO:0008283">
    <property type="term" value="P:cell population proliferation"/>
    <property type="evidence" value="ECO:0007669"/>
    <property type="project" value="Ensembl"/>
</dbReference>
<dbReference type="GO" id="GO:0045216">
    <property type="term" value="P:cell-cell junction organization"/>
    <property type="evidence" value="ECO:0000315"/>
    <property type="project" value="BHF-UCL"/>
</dbReference>
<dbReference type="GO" id="GO:0071333">
    <property type="term" value="P:cellular response to glucose stimulus"/>
    <property type="evidence" value="ECO:0007669"/>
    <property type="project" value="Ensembl"/>
</dbReference>
<dbReference type="GO" id="GO:0071560">
    <property type="term" value="P:cellular response to transforming growth factor beta stimulus"/>
    <property type="evidence" value="ECO:0000314"/>
    <property type="project" value="CAFA"/>
</dbReference>
<dbReference type="GO" id="GO:0098586">
    <property type="term" value="P:cellular response to virus"/>
    <property type="evidence" value="ECO:0007669"/>
    <property type="project" value="Ensembl"/>
</dbReference>
<dbReference type="GO" id="GO:0048589">
    <property type="term" value="P:developmental growth"/>
    <property type="evidence" value="ECO:0007669"/>
    <property type="project" value="Ensembl"/>
</dbReference>
<dbReference type="GO" id="GO:0048701">
    <property type="term" value="P:embryonic cranial skeleton morphogenesis"/>
    <property type="evidence" value="ECO:0007669"/>
    <property type="project" value="Ensembl"/>
</dbReference>
<dbReference type="GO" id="GO:0048617">
    <property type="term" value="P:embryonic foregut morphogenesis"/>
    <property type="evidence" value="ECO:0007669"/>
    <property type="project" value="Ensembl"/>
</dbReference>
<dbReference type="GO" id="GO:0009880">
    <property type="term" value="P:embryonic pattern specification"/>
    <property type="evidence" value="ECO:0007669"/>
    <property type="project" value="Ensembl"/>
</dbReference>
<dbReference type="GO" id="GO:0007492">
    <property type="term" value="P:endoderm development"/>
    <property type="evidence" value="ECO:0007669"/>
    <property type="project" value="Ensembl"/>
</dbReference>
<dbReference type="GO" id="GO:0097191">
    <property type="term" value="P:extrinsic apoptotic signaling pathway"/>
    <property type="evidence" value="ECO:0000315"/>
    <property type="project" value="BHF-UCL"/>
</dbReference>
<dbReference type="GO" id="GO:0001947">
    <property type="term" value="P:heart looping"/>
    <property type="evidence" value="ECO:0007669"/>
    <property type="project" value="Ensembl"/>
</dbReference>
<dbReference type="GO" id="GO:0006955">
    <property type="term" value="P:immune response"/>
    <property type="evidence" value="ECO:0000315"/>
    <property type="project" value="BHF-UCL"/>
</dbReference>
<dbReference type="GO" id="GO:0002520">
    <property type="term" value="P:immune system development"/>
    <property type="evidence" value="ECO:0007669"/>
    <property type="project" value="Ensembl"/>
</dbReference>
<dbReference type="GO" id="GO:0001701">
    <property type="term" value="P:in utero embryonic development"/>
    <property type="evidence" value="ECO:0007669"/>
    <property type="project" value="Ensembl"/>
</dbReference>
<dbReference type="GO" id="GO:0007254">
    <property type="term" value="P:JNK cascade"/>
    <property type="evidence" value="ECO:0007669"/>
    <property type="project" value="Ensembl"/>
</dbReference>
<dbReference type="GO" id="GO:0070306">
    <property type="term" value="P:lens fiber cell differentiation"/>
    <property type="evidence" value="ECO:0007669"/>
    <property type="project" value="Ensembl"/>
</dbReference>
<dbReference type="GO" id="GO:0001889">
    <property type="term" value="P:liver development"/>
    <property type="evidence" value="ECO:0007669"/>
    <property type="project" value="Ensembl"/>
</dbReference>
<dbReference type="GO" id="GO:0001707">
    <property type="term" value="P:mesoderm formation"/>
    <property type="evidence" value="ECO:0007669"/>
    <property type="project" value="Ensembl"/>
</dbReference>
<dbReference type="GO" id="GO:0043066">
    <property type="term" value="P:negative regulation of apoptotic process"/>
    <property type="evidence" value="ECO:0007669"/>
    <property type="project" value="Ensembl"/>
</dbReference>
<dbReference type="GO" id="GO:1903243">
    <property type="term" value="P:negative regulation of cardiac muscle hypertrophy in response to stress"/>
    <property type="evidence" value="ECO:0007669"/>
    <property type="project" value="Ensembl"/>
</dbReference>
<dbReference type="GO" id="GO:0045596">
    <property type="term" value="P:negative regulation of cell differentiation"/>
    <property type="evidence" value="ECO:0000250"/>
    <property type="project" value="UniProt"/>
</dbReference>
<dbReference type="GO" id="GO:0030308">
    <property type="term" value="P:negative regulation of cell growth"/>
    <property type="evidence" value="ECO:0000314"/>
    <property type="project" value="BHF-UCL"/>
</dbReference>
<dbReference type="GO" id="GO:0008285">
    <property type="term" value="P:negative regulation of cell population proliferation"/>
    <property type="evidence" value="ECO:0000315"/>
    <property type="project" value="BHF-UCL"/>
</dbReference>
<dbReference type="GO" id="GO:0051481">
    <property type="term" value="P:negative regulation of cytosolic calcium ion concentration"/>
    <property type="evidence" value="ECO:0000314"/>
    <property type="project" value="BHF-UCL"/>
</dbReference>
<dbReference type="GO" id="GO:0045599">
    <property type="term" value="P:negative regulation of fat cell differentiation"/>
    <property type="evidence" value="ECO:0000314"/>
    <property type="project" value="BHF-UCL"/>
</dbReference>
<dbReference type="GO" id="GO:0010629">
    <property type="term" value="P:negative regulation of gene expression"/>
    <property type="evidence" value="ECO:0000315"/>
    <property type="project" value="BHF-UCL"/>
</dbReference>
<dbReference type="GO" id="GO:0050728">
    <property type="term" value="P:negative regulation of inflammatory response"/>
    <property type="evidence" value="ECO:0007669"/>
    <property type="project" value="Ensembl"/>
</dbReference>
<dbReference type="GO" id="GO:0061767">
    <property type="term" value="P:negative regulation of lung blood pressure"/>
    <property type="evidence" value="ECO:0007669"/>
    <property type="project" value="Ensembl"/>
</dbReference>
<dbReference type="GO" id="GO:1902894">
    <property type="term" value="P:negative regulation of miRNA transcription"/>
    <property type="evidence" value="ECO:0000315"/>
    <property type="project" value="BHF-UCL"/>
</dbReference>
<dbReference type="GO" id="GO:0030279">
    <property type="term" value="P:negative regulation of ossification"/>
    <property type="evidence" value="ECO:0000314"/>
    <property type="project" value="UniProt"/>
</dbReference>
<dbReference type="GO" id="GO:0045668">
    <property type="term" value="P:negative regulation of osteoblast differentiation"/>
    <property type="evidence" value="ECO:0007669"/>
    <property type="project" value="Ensembl"/>
</dbReference>
<dbReference type="GO" id="GO:0033689">
    <property type="term" value="P:negative regulation of osteoblast proliferation"/>
    <property type="evidence" value="ECO:0007669"/>
    <property type="project" value="Ensembl"/>
</dbReference>
<dbReference type="GO" id="GO:0042177">
    <property type="term" value="P:negative regulation of protein catabolic process"/>
    <property type="evidence" value="ECO:0007669"/>
    <property type="project" value="Ensembl"/>
</dbReference>
<dbReference type="GO" id="GO:0000122">
    <property type="term" value="P:negative regulation of transcription by RNA polymerase II"/>
    <property type="evidence" value="ECO:0000314"/>
    <property type="project" value="ARUK-UCL"/>
</dbReference>
<dbReference type="GO" id="GO:0061045">
    <property type="term" value="P:negative regulation of wound healing"/>
    <property type="evidence" value="ECO:0007669"/>
    <property type="project" value="Ensembl"/>
</dbReference>
<dbReference type="GO" id="GO:0038092">
    <property type="term" value="P:nodal signaling pathway"/>
    <property type="evidence" value="ECO:0000315"/>
    <property type="project" value="BHF-UCL"/>
</dbReference>
<dbReference type="GO" id="GO:0002076">
    <property type="term" value="P:osteoblast development"/>
    <property type="evidence" value="ECO:0007669"/>
    <property type="project" value="Ensembl"/>
</dbReference>
<dbReference type="GO" id="GO:0048340">
    <property type="term" value="P:paraxial mesoderm morphogenesis"/>
    <property type="evidence" value="ECO:0007669"/>
    <property type="project" value="Ensembl"/>
</dbReference>
<dbReference type="GO" id="GO:0060039">
    <property type="term" value="P:pericardium development"/>
    <property type="evidence" value="ECO:0007669"/>
    <property type="project" value="Ensembl"/>
</dbReference>
<dbReference type="GO" id="GO:0030501">
    <property type="term" value="P:positive regulation of bone mineralization"/>
    <property type="evidence" value="ECO:0007669"/>
    <property type="project" value="Ensembl"/>
</dbReference>
<dbReference type="GO" id="GO:0090263">
    <property type="term" value="P:positive regulation of canonical Wnt signaling pathway"/>
    <property type="evidence" value="ECO:0007669"/>
    <property type="project" value="Ensembl"/>
</dbReference>
<dbReference type="GO" id="GO:0030335">
    <property type="term" value="P:positive regulation of cell migration"/>
    <property type="evidence" value="ECO:0007669"/>
    <property type="project" value="Ensembl"/>
</dbReference>
<dbReference type="GO" id="GO:0032332">
    <property type="term" value="P:positive regulation of chondrocyte differentiation"/>
    <property type="evidence" value="ECO:0007669"/>
    <property type="project" value="Ensembl"/>
</dbReference>
<dbReference type="GO" id="GO:0045893">
    <property type="term" value="P:positive regulation of DNA-templated transcription"/>
    <property type="evidence" value="ECO:0000314"/>
    <property type="project" value="BHF-UCL"/>
</dbReference>
<dbReference type="GO" id="GO:0010718">
    <property type="term" value="P:positive regulation of epithelial to mesenchymal transition"/>
    <property type="evidence" value="ECO:0000314"/>
    <property type="project" value="BHF-UCL"/>
</dbReference>
<dbReference type="GO" id="GO:1901203">
    <property type="term" value="P:positive regulation of extracellular matrix assembly"/>
    <property type="evidence" value="ECO:0000314"/>
    <property type="project" value="BHF-UCL"/>
</dbReference>
<dbReference type="GO" id="GO:0051894">
    <property type="term" value="P:positive regulation of focal adhesion assembly"/>
    <property type="evidence" value="ECO:0007669"/>
    <property type="project" value="Ensembl"/>
</dbReference>
<dbReference type="GO" id="GO:0010628">
    <property type="term" value="P:positive regulation of gene expression"/>
    <property type="evidence" value="ECO:0000314"/>
    <property type="project" value="BHF-UCL"/>
</dbReference>
<dbReference type="GO" id="GO:0032731">
    <property type="term" value="P:positive regulation of interleukin-1 beta production"/>
    <property type="evidence" value="ECO:0007669"/>
    <property type="project" value="Ensembl"/>
</dbReference>
<dbReference type="GO" id="GO:1902895">
    <property type="term" value="P:positive regulation of miRNA transcription"/>
    <property type="evidence" value="ECO:0000314"/>
    <property type="project" value="BHF-UCL"/>
</dbReference>
<dbReference type="GO" id="GO:0045429">
    <property type="term" value="P:positive regulation of nitric oxide biosynthetic process"/>
    <property type="evidence" value="ECO:0000314"/>
    <property type="project" value="BHF-UCL"/>
</dbReference>
<dbReference type="GO" id="GO:0050927">
    <property type="term" value="P:positive regulation of positive chemotaxis"/>
    <property type="evidence" value="ECO:0007669"/>
    <property type="project" value="Ensembl"/>
</dbReference>
<dbReference type="GO" id="GO:0042307">
    <property type="term" value="P:positive regulation of protein import into nucleus"/>
    <property type="evidence" value="ECO:0000303"/>
    <property type="project" value="BHF-UCL"/>
</dbReference>
<dbReference type="GO" id="GO:0060391">
    <property type="term" value="P:positive regulation of SMAD protein signal transduction"/>
    <property type="evidence" value="ECO:0000315"/>
    <property type="project" value="BHF-UCL"/>
</dbReference>
<dbReference type="GO" id="GO:0051496">
    <property type="term" value="P:positive regulation of stress fiber assembly"/>
    <property type="evidence" value="ECO:0007669"/>
    <property type="project" value="Ensembl"/>
</dbReference>
<dbReference type="GO" id="GO:0045944">
    <property type="term" value="P:positive regulation of transcription by RNA polymerase II"/>
    <property type="evidence" value="ECO:0000314"/>
    <property type="project" value="UniProtKB"/>
</dbReference>
<dbReference type="GO" id="GO:0032916">
    <property type="term" value="P:positive regulation of transforming growth factor beta3 production"/>
    <property type="evidence" value="ECO:0007669"/>
    <property type="project" value="Ensembl"/>
</dbReference>
<dbReference type="GO" id="GO:0031053">
    <property type="term" value="P:primary miRNA processing"/>
    <property type="evidence" value="ECO:0000304"/>
    <property type="project" value="BHF-UCL"/>
</dbReference>
<dbReference type="GO" id="GO:0050821">
    <property type="term" value="P:protein stabilization"/>
    <property type="evidence" value="ECO:0007669"/>
    <property type="project" value="Ensembl"/>
</dbReference>
<dbReference type="GO" id="GO:0006355">
    <property type="term" value="P:regulation of DNA-templated transcription"/>
    <property type="evidence" value="ECO:0000314"/>
    <property type="project" value="ComplexPortal"/>
</dbReference>
<dbReference type="GO" id="GO:0050678">
    <property type="term" value="P:regulation of epithelial cell proliferation"/>
    <property type="evidence" value="ECO:0007669"/>
    <property type="project" value="Ensembl"/>
</dbReference>
<dbReference type="GO" id="GO:0050776">
    <property type="term" value="P:regulation of immune response"/>
    <property type="evidence" value="ECO:0007669"/>
    <property type="project" value="Ensembl"/>
</dbReference>
<dbReference type="GO" id="GO:1902893">
    <property type="term" value="P:regulation of miRNA transcription"/>
    <property type="evidence" value="ECO:0000305"/>
    <property type="project" value="ARUK-UCL"/>
</dbReference>
<dbReference type="GO" id="GO:0051881">
    <property type="term" value="P:regulation of mitochondrial membrane potential"/>
    <property type="evidence" value="ECO:0007669"/>
    <property type="project" value="Ensembl"/>
</dbReference>
<dbReference type="GO" id="GO:0016202">
    <property type="term" value="P:regulation of striated muscle tissue development"/>
    <property type="evidence" value="ECO:0007669"/>
    <property type="project" value="Ensembl"/>
</dbReference>
<dbReference type="GO" id="GO:0006357">
    <property type="term" value="P:regulation of transcription by RNA polymerase II"/>
    <property type="evidence" value="ECO:0000314"/>
    <property type="project" value="NTNU_SB"/>
</dbReference>
<dbReference type="GO" id="GO:0017015">
    <property type="term" value="P:regulation of transforming growth factor beta receptor signaling pathway"/>
    <property type="evidence" value="ECO:0007669"/>
    <property type="project" value="Ensembl"/>
</dbReference>
<dbReference type="GO" id="GO:0032909">
    <property type="term" value="P:regulation of transforming growth factor beta2 production"/>
    <property type="evidence" value="ECO:0000315"/>
    <property type="project" value="BHF-UCL"/>
</dbReference>
<dbReference type="GO" id="GO:0001836">
    <property type="term" value="P:release of cytochrome c from mitochondria"/>
    <property type="evidence" value="ECO:0007669"/>
    <property type="project" value="Ensembl"/>
</dbReference>
<dbReference type="GO" id="GO:1990776">
    <property type="term" value="P:response to angiotensin"/>
    <property type="evidence" value="ECO:0000315"/>
    <property type="project" value="BHF-UCL"/>
</dbReference>
<dbReference type="GO" id="GO:0001666">
    <property type="term" value="P:response to hypoxia"/>
    <property type="evidence" value="ECO:0000315"/>
    <property type="project" value="BHF-UCL"/>
</dbReference>
<dbReference type="GO" id="GO:0023019">
    <property type="term" value="P:signal transduction involved in regulation of gene expression"/>
    <property type="evidence" value="ECO:0007669"/>
    <property type="project" value="Ensembl"/>
</dbReference>
<dbReference type="GO" id="GO:0060395">
    <property type="term" value="P:SMAD protein signal transduction"/>
    <property type="evidence" value="ECO:0000314"/>
    <property type="project" value="BHF-UCL"/>
</dbReference>
<dbReference type="GO" id="GO:0001756">
    <property type="term" value="P:somitogenesis"/>
    <property type="evidence" value="ECO:0007669"/>
    <property type="project" value="Ensembl"/>
</dbReference>
<dbReference type="GO" id="GO:0042110">
    <property type="term" value="P:T cell activation"/>
    <property type="evidence" value="ECO:0007669"/>
    <property type="project" value="Ensembl"/>
</dbReference>
<dbReference type="GO" id="GO:0030878">
    <property type="term" value="P:thyroid gland development"/>
    <property type="evidence" value="ECO:0007669"/>
    <property type="project" value="Ensembl"/>
</dbReference>
<dbReference type="GO" id="GO:0060290">
    <property type="term" value="P:transdifferentiation"/>
    <property type="evidence" value="ECO:0007669"/>
    <property type="project" value="Ensembl"/>
</dbReference>
<dbReference type="GO" id="GO:0007179">
    <property type="term" value="P:transforming growth factor beta receptor signaling pathway"/>
    <property type="evidence" value="ECO:0000314"/>
    <property type="project" value="UniProtKB"/>
</dbReference>
<dbReference type="GO" id="GO:0061450">
    <property type="term" value="P:trophoblast cell migration"/>
    <property type="evidence" value="ECO:0000314"/>
    <property type="project" value="UniProt"/>
</dbReference>
<dbReference type="GO" id="GO:0001657">
    <property type="term" value="P:ureteric bud development"/>
    <property type="evidence" value="ECO:0007669"/>
    <property type="project" value="Ensembl"/>
</dbReference>
<dbReference type="GO" id="GO:0042060">
    <property type="term" value="P:wound healing"/>
    <property type="evidence" value="ECO:0000304"/>
    <property type="project" value="BHF-UCL"/>
</dbReference>
<dbReference type="CDD" id="cd10491">
    <property type="entry name" value="MH1_SMAD_2_3"/>
    <property type="match status" value="1"/>
</dbReference>
<dbReference type="CDD" id="cd10985">
    <property type="entry name" value="MH2_SMAD_2_3"/>
    <property type="match status" value="1"/>
</dbReference>
<dbReference type="DisProt" id="DP01648"/>
<dbReference type="FunFam" id="2.60.200.10:FF:000001">
    <property type="entry name" value="Mothers against decapentaplegic homolog"/>
    <property type="match status" value="1"/>
</dbReference>
<dbReference type="FunFam" id="3.90.520.10:FF:000001">
    <property type="entry name" value="Mothers against decapentaplegic homolog"/>
    <property type="match status" value="1"/>
</dbReference>
<dbReference type="Gene3D" id="2.60.200.10">
    <property type="match status" value="1"/>
</dbReference>
<dbReference type="Gene3D" id="3.90.520.10">
    <property type="entry name" value="SMAD MH1 domain"/>
    <property type="match status" value="1"/>
</dbReference>
<dbReference type="IDEAL" id="IID00113"/>
<dbReference type="InterPro" id="IPR013790">
    <property type="entry name" value="Dwarfin"/>
</dbReference>
<dbReference type="InterPro" id="IPR003619">
    <property type="entry name" value="MAD_homology1_Dwarfin-type"/>
</dbReference>
<dbReference type="InterPro" id="IPR013019">
    <property type="entry name" value="MAD_homology_MH1"/>
</dbReference>
<dbReference type="InterPro" id="IPR017855">
    <property type="entry name" value="SMAD-like_dom_sf"/>
</dbReference>
<dbReference type="InterPro" id="IPR001132">
    <property type="entry name" value="SMAD_dom_Dwarfin-type"/>
</dbReference>
<dbReference type="InterPro" id="IPR008984">
    <property type="entry name" value="SMAD_FHA_dom_sf"/>
</dbReference>
<dbReference type="InterPro" id="IPR036578">
    <property type="entry name" value="SMAD_MH1_sf"/>
</dbReference>
<dbReference type="PANTHER" id="PTHR13703:SF53">
    <property type="entry name" value="MOTHERS AGAINST DECAPENTAPLEGIC HOMOLOG 3"/>
    <property type="match status" value="1"/>
</dbReference>
<dbReference type="PANTHER" id="PTHR13703">
    <property type="entry name" value="SMAD"/>
    <property type="match status" value="1"/>
</dbReference>
<dbReference type="Pfam" id="PF03165">
    <property type="entry name" value="MH1"/>
    <property type="match status" value="1"/>
</dbReference>
<dbReference type="Pfam" id="PF03166">
    <property type="entry name" value="MH2"/>
    <property type="match status" value="1"/>
</dbReference>
<dbReference type="SMART" id="SM00523">
    <property type="entry name" value="DWA"/>
    <property type="match status" value="1"/>
</dbReference>
<dbReference type="SMART" id="SM00524">
    <property type="entry name" value="DWB"/>
    <property type="match status" value="1"/>
</dbReference>
<dbReference type="SUPFAM" id="SSF56366">
    <property type="entry name" value="SMAD MH1 domain"/>
    <property type="match status" value="1"/>
</dbReference>
<dbReference type="SUPFAM" id="SSF49879">
    <property type="entry name" value="SMAD/FHA domain"/>
    <property type="match status" value="1"/>
</dbReference>
<dbReference type="PROSITE" id="PS51075">
    <property type="entry name" value="MH1"/>
    <property type="match status" value="1"/>
</dbReference>
<dbReference type="PROSITE" id="PS51076">
    <property type="entry name" value="MH2"/>
    <property type="match status" value="1"/>
</dbReference>
<reference key="1">
    <citation type="journal article" date="1996" name="Nature">
        <title>Receptor-associated Mad homologues synergize as effectors of the TGF-beta response.</title>
        <authorList>
            <person name="Zhang Y."/>
            <person name="Feng X.-H."/>
            <person name="Wu R.-Y."/>
            <person name="Derynck R."/>
        </authorList>
    </citation>
    <scope>NUCLEOTIDE SEQUENCE [MRNA] (ISOFORM 1)</scope>
    <scope>PHOSPHORYLATION</scope>
    <source>
        <tissue>Placenta</tissue>
    </source>
</reference>
<reference key="2">
    <citation type="journal article" date="1996" name="Nat. Genet.">
        <title>Mad-related genes in the human.</title>
        <authorList>
            <person name="Riggins G.J."/>
            <person name="Thiagalingam S."/>
            <person name="Rosenblum E."/>
            <person name="Weinstein C.L."/>
            <person name="Kern S.E."/>
            <person name="Hamilton S.R."/>
            <person name="Willson J.K.V."/>
            <person name="Markowitz S.D."/>
            <person name="Kinzler K.W."/>
            <person name="Vogelstein B.V."/>
        </authorList>
    </citation>
    <scope>NUCLEOTIDE SEQUENCE [MRNA] (ISOFORM 1)</scope>
</reference>
<reference key="3">
    <citation type="journal article" date="1998" name="Cancer Lett.">
        <title>Genomic structure of the human Smad3 gene and its infrequent alterations in colorectal cancers.</title>
        <authorList>
            <person name="Arai T."/>
            <person name="Akiyama Y."/>
            <person name="Okabe S."/>
            <person name="Ando M."/>
            <person name="Endo M."/>
            <person name="Yuasa Y."/>
        </authorList>
    </citation>
    <scope>NUCLEOTIDE SEQUENCE [GENOMIC DNA]</scope>
    <source>
        <tissue>Colon carcinoma</tissue>
    </source>
</reference>
<reference key="4">
    <citation type="submission" date="1997-09" db="EMBL/GenBank/DDBJ databases">
        <authorList>
            <person name="Hagiwara K."/>
            <person name="Yang K."/>
            <person name="McMenamin M.G."/>
            <person name="Freeman A.H."/>
            <person name="Bennett W.P."/>
            <person name="Nagashima M."/>
            <person name="Minter A.R."/>
            <person name="Miyazono K."/>
            <person name="Takenoshita S."/>
            <person name="Harris C.C."/>
        </authorList>
    </citation>
    <scope>NUCLEOTIDE SEQUENCE [GENOMIC DNA]</scope>
</reference>
<reference key="5">
    <citation type="journal article" date="2004" name="Nat. Genet.">
        <title>Complete sequencing and characterization of 21,243 full-length human cDNAs.</title>
        <authorList>
            <person name="Ota T."/>
            <person name="Suzuki Y."/>
            <person name="Nishikawa T."/>
            <person name="Otsuki T."/>
            <person name="Sugiyama T."/>
            <person name="Irie R."/>
            <person name="Wakamatsu A."/>
            <person name="Hayashi K."/>
            <person name="Sato H."/>
            <person name="Nagai K."/>
            <person name="Kimura K."/>
            <person name="Makita H."/>
            <person name="Sekine M."/>
            <person name="Obayashi M."/>
            <person name="Nishi T."/>
            <person name="Shibahara T."/>
            <person name="Tanaka T."/>
            <person name="Ishii S."/>
            <person name="Yamamoto J."/>
            <person name="Saito K."/>
            <person name="Kawai Y."/>
            <person name="Isono Y."/>
            <person name="Nakamura Y."/>
            <person name="Nagahari K."/>
            <person name="Murakami K."/>
            <person name="Yasuda T."/>
            <person name="Iwayanagi T."/>
            <person name="Wagatsuma M."/>
            <person name="Shiratori A."/>
            <person name="Sudo H."/>
            <person name="Hosoiri T."/>
            <person name="Kaku Y."/>
            <person name="Kodaira H."/>
            <person name="Kondo H."/>
            <person name="Sugawara M."/>
            <person name="Takahashi M."/>
            <person name="Kanda K."/>
            <person name="Yokoi T."/>
            <person name="Furuya T."/>
            <person name="Kikkawa E."/>
            <person name="Omura Y."/>
            <person name="Abe K."/>
            <person name="Kamihara K."/>
            <person name="Katsuta N."/>
            <person name="Sato K."/>
            <person name="Tanikawa M."/>
            <person name="Yamazaki M."/>
            <person name="Ninomiya K."/>
            <person name="Ishibashi T."/>
            <person name="Yamashita H."/>
            <person name="Murakawa K."/>
            <person name="Fujimori K."/>
            <person name="Tanai H."/>
            <person name="Kimata M."/>
            <person name="Watanabe M."/>
            <person name="Hiraoka S."/>
            <person name="Chiba Y."/>
            <person name="Ishida S."/>
            <person name="Ono Y."/>
            <person name="Takiguchi S."/>
            <person name="Watanabe S."/>
            <person name="Yosida M."/>
            <person name="Hotuta T."/>
            <person name="Kusano J."/>
            <person name="Kanehori K."/>
            <person name="Takahashi-Fujii A."/>
            <person name="Hara H."/>
            <person name="Tanase T.-O."/>
            <person name="Nomura Y."/>
            <person name="Togiya S."/>
            <person name="Komai F."/>
            <person name="Hara R."/>
            <person name="Takeuchi K."/>
            <person name="Arita M."/>
            <person name="Imose N."/>
            <person name="Musashino K."/>
            <person name="Yuuki H."/>
            <person name="Oshima A."/>
            <person name="Sasaki N."/>
            <person name="Aotsuka S."/>
            <person name="Yoshikawa Y."/>
            <person name="Matsunawa H."/>
            <person name="Ichihara T."/>
            <person name="Shiohata N."/>
            <person name="Sano S."/>
            <person name="Moriya S."/>
            <person name="Momiyama H."/>
            <person name="Satoh N."/>
            <person name="Takami S."/>
            <person name="Terashima Y."/>
            <person name="Suzuki O."/>
            <person name="Nakagawa S."/>
            <person name="Senoh A."/>
            <person name="Mizoguchi H."/>
            <person name="Goto Y."/>
            <person name="Shimizu F."/>
            <person name="Wakebe H."/>
            <person name="Hishigaki H."/>
            <person name="Watanabe T."/>
            <person name="Sugiyama A."/>
            <person name="Takemoto M."/>
            <person name="Kawakami B."/>
            <person name="Yamazaki M."/>
            <person name="Watanabe K."/>
            <person name="Kumagai A."/>
            <person name="Itakura S."/>
            <person name="Fukuzumi Y."/>
            <person name="Fujimori Y."/>
            <person name="Komiyama M."/>
            <person name="Tashiro H."/>
            <person name="Tanigami A."/>
            <person name="Fujiwara T."/>
            <person name="Ono T."/>
            <person name="Yamada K."/>
            <person name="Fujii Y."/>
            <person name="Ozaki K."/>
            <person name="Hirao M."/>
            <person name="Ohmori Y."/>
            <person name="Kawabata A."/>
            <person name="Hikiji T."/>
            <person name="Kobatake N."/>
            <person name="Inagaki H."/>
            <person name="Ikema Y."/>
            <person name="Okamoto S."/>
            <person name="Okitani R."/>
            <person name="Kawakami T."/>
            <person name="Noguchi S."/>
            <person name="Itoh T."/>
            <person name="Shigeta K."/>
            <person name="Senba T."/>
            <person name="Matsumura K."/>
            <person name="Nakajima Y."/>
            <person name="Mizuno T."/>
            <person name="Morinaga M."/>
            <person name="Sasaki M."/>
            <person name="Togashi T."/>
            <person name="Oyama M."/>
            <person name="Hata H."/>
            <person name="Watanabe M."/>
            <person name="Komatsu T."/>
            <person name="Mizushima-Sugano J."/>
            <person name="Satoh T."/>
            <person name="Shirai Y."/>
            <person name="Takahashi Y."/>
            <person name="Nakagawa K."/>
            <person name="Okumura K."/>
            <person name="Nagase T."/>
            <person name="Nomura N."/>
            <person name="Kikuchi H."/>
            <person name="Masuho Y."/>
            <person name="Yamashita R."/>
            <person name="Nakai K."/>
            <person name="Yada T."/>
            <person name="Nakamura Y."/>
            <person name="Ohara O."/>
            <person name="Isogai T."/>
            <person name="Sugano S."/>
        </authorList>
    </citation>
    <scope>NUCLEOTIDE SEQUENCE [LARGE SCALE MRNA] (ISOFORMS 1; 2; 3 AND 4)</scope>
    <source>
        <tissue>Brain</tissue>
    </source>
</reference>
<reference key="6">
    <citation type="journal article" date="2006" name="Nature">
        <title>Analysis of the DNA sequence and duplication history of human chromosome 15.</title>
        <authorList>
            <person name="Zody M.C."/>
            <person name="Garber M."/>
            <person name="Sharpe T."/>
            <person name="Young S.K."/>
            <person name="Rowen L."/>
            <person name="O'Neill K."/>
            <person name="Whittaker C.A."/>
            <person name="Kamal M."/>
            <person name="Chang J.L."/>
            <person name="Cuomo C.A."/>
            <person name="Dewar K."/>
            <person name="FitzGerald M.G."/>
            <person name="Kodira C.D."/>
            <person name="Madan A."/>
            <person name="Qin S."/>
            <person name="Yang X."/>
            <person name="Abbasi N."/>
            <person name="Abouelleil A."/>
            <person name="Arachchi H.M."/>
            <person name="Baradarani L."/>
            <person name="Birditt B."/>
            <person name="Bloom S."/>
            <person name="Bloom T."/>
            <person name="Borowsky M.L."/>
            <person name="Burke J."/>
            <person name="Butler J."/>
            <person name="Cook A."/>
            <person name="DeArellano K."/>
            <person name="DeCaprio D."/>
            <person name="Dorris L. III"/>
            <person name="Dors M."/>
            <person name="Eichler E.E."/>
            <person name="Engels R."/>
            <person name="Fahey J."/>
            <person name="Fleetwood P."/>
            <person name="Friedman C."/>
            <person name="Gearin G."/>
            <person name="Hall J.L."/>
            <person name="Hensley G."/>
            <person name="Johnson E."/>
            <person name="Jones C."/>
            <person name="Kamat A."/>
            <person name="Kaur A."/>
            <person name="Locke D.P."/>
            <person name="Madan A."/>
            <person name="Munson G."/>
            <person name="Jaffe D.B."/>
            <person name="Lui A."/>
            <person name="Macdonald P."/>
            <person name="Mauceli E."/>
            <person name="Naylor J.W."/>
            <person name="Nesbitt R."/>
            <person name="Nicol R."/>
            <person name="O'Leary S.B."/>
            <person name="Ratcliffe A."/>
            <person name="Rounsley S."/>
            <person name="She X."/>
            <person name="Sneddon K.M.B."/>
            <person name="Stewart S."/>
            <person name="Sougnez C."/>
            <person name="Stone S.M."/>
            <person name="Topham K."/>
            <person name="Vincent D."/>
            <person name="Wang S."/>
            <person name="Zimmer A.R."/>
            <person name="Birren B.W."/>
            <person name="Hood L."/>
            <person name="Lander E.S."/>
            <person name="Nusbaum C."/>
        </authorList>
    </citation>
    <scope>NUCLEOTIDE SEQUENCE [LARGE SCALE GENOMIC DNA]</scope>
</reference>
<reference key="7">
    <citation type="submission" date="2005-07" db="EMBL/GenBank/DDBJ databases">
        <authorList>
            <person name="Mural R.J."/>
            <person name="Istrail S."/>
            <person name="Sutton G.G."/>
            <person name="Florea L."/>
            <person name="Halpern A.L."/>
            <person name="Mobarry C.M."/>
            <person name="Lippert R."/>
            <person name="Walenz B."/>
            <person name="Shatkay H."/>
            <person name="Dew I."/>
            <person name="Miller J.R."/>
            <person name="Flanigan M.J."/>
            <person name="Edwards N.J."/>
            <person name="Bolanos R."/>
            <person name="Fasulo D."/>
            <person name="Halldorsson B.V."/>
            <person name="Hannenhalli S."/>
            <person name="Turner R."/>
            <person name="Yooseph S."/>
            <person name="Lu F."/>
            <person name="Nusskern D.R."/>
            <person name="Shue B.C."/>
            <person name="Zheng X.H."/>
            <person name="Zhong F."/>
            <person name="Delcher A.L."/>
            <person name="Huson D.H."/>
            <person name="Kravitz S.A."/>
            <person name="Mouchard L."/>
            <person name="Reinert K."/>
            <person name="Remington K.A."/>
            <person name="Clark A.G."/>
            <person name="Waterman M.S."/>
            <person name="Eichler E.E."/>
            <person name="Adams M.D."/>
            <person name="Hunkapiller M.W."/>
            <person name="Myers E.W."/>
            <person name="Venter J.C."/>
        </authorList>
    </citation>
    <scope>NUCLEOTIDE SEQUENCE [LARGE SCALE GENOMIC DNA]</scope>
</reference>
<reference key="8">
    <citation type="journal article" date="2004" name="Genome Res.">
        <title>The status, quality, and expansion of the NIH full-length cDNA project: the Mammalian Gene Collection (MGC).</title>
        <authorList>
            <consortium name="The MGC Project Team"/>
        </authorList>
    </citation>
    <scope>NUCLEOTIDE SEQUENCE [LARGE SCALE MRNA] (ISOFORM 1)</scope>
    <source>
        <tissue>Pancreas</tissue>
    </source>
</reference>
<reference key="9">
    <citation type="journal article" date="1997" name="EMBO J.">
        <title>TGF-beta receptor-mediated signalling through Smad2, Smad3 and Smad4.</title>
        <authorList>
            <person name="Nakao A."/>
            <person name="Imamura T."/>
            <person name="Souchelnytskyi S."/>
            <person name="Kawabata M."/>
            <person name="Ishisaki A."/>
            <person name="Oeda E."/>
            <person name="Tamaki K."/>
            <person name="Hanai J."/>
            <person name="Heldin C.H."/>
            <person name="Miyazono K."/>
            <person name="ten Dijke P."/>
        </authorList>
    </citation>
    <scope>INTERACTION WITH TGFBR1</scope>
</reference>
<reference key="10">
    <citation type="journal article" date="1998" name="Cell">
        <title>SARA, a FYVE domain protein that recruits Smad2 to the TGFbeta receptor.</title>
        <authorList>
            <person name="Tsukazaki T."/>
            <person name="Chiang T.A."/>
            <person name="Davison A.F."/>
            <person name="Attisano L."/>
            <person name="Wrana J.L."/>
        </authorList>
    </citation>
    <scope>INTERACTION WITH ZFYVE9</scope>
</reference>
<reference key="11">
    <citation type="journal article" date="1998" name="EMBO J.">
        <title>Smad proteins exist as monomers in vivo and undergo homo- and hetero-oligomerization upon activation by serine/threonine kinase receptors.</title>
        <authorList>
            <person name="Kawabata M."/>
            <person name="Inoue H."/>
            <person name="Hanyu A."/>
            <person name="Imamura T."/>
            <person name="Miyazono K."/>
        </authorList>
    </citation>
    <scope>SUBUNIT</scope>
</reference>
<reference key="12">
    <citation type="journal article" date="1998" name="Mol. Biol. Cell">
        <title>TGF-beta-induced phosphorylation of Smad3 regulates its interaction with coactivator p300/CREB-binding protein.</title>
        <authorList>
            <person name="Shen X."/>
            <person name="Hu P.P."/>
            <person name="Liberati N.T."/>
            <person name="Datto M.B."/>
            <person name="Frederick J.P."/>
            <person name="Wang X.F."/>
        </authorList>
    </citation>
    <scope>PHOSPHORYLATION</scope>
    <scope>INTERACTION WITH EP300</scope>
</reference>
<reference key="13">
    <citation type="journal article" date="1998" name="Nature">
        <title>The oncoprotein Evi-1 represses TGF-beta signalling by inhibiting Smad3.</title>
        <authorList>
            <person name="Kurokawa M."/>
            <person name="Mitani K."/>
            <person name="Irie K."/>
            <person name="Matsuyama T."/>
            <person name="Takahashi T."/>
            <person name="Chiba S."/>
            <person name="Yazaki Y."/>
            <person name="Matsumoto K."/>
            <person name="Hirai H."/>
        </authorList>
    </citation>
    <scope>INTERACTION WITH MECOM</scope>
</reference>
<reference key="14">
    <citation type="journal article" date="1998" name="Nature">
        <title>Smad3 and Smad4 cooperate with c-Jun/c-Fos to mediate TGF-beta-induced transcription.</title>
        <authorList>
            <person name="Zhang Y."/>
            <person name="Feng X.H."/>
            <person name="Derynck R."/>
        </authorList>
    </citation>
    <scope>IDENTIFICATION AS A COMPONENT OF THE SMAD3/SMAD4/JUN/FOS COMPLEX</scope>
    <scope>INTERACTION WITH JUN AND FOS</scope>
    <scope>DNA-BINDING</scope>
    <scope>FUNCTION</scope>
</reference>
<reference key="15">
    <citation type="journal article" date="1999" name="Mol. Endocrinol.">
        <title>Roles of pathway-specific and inhibitory Smads in activin receptor signaling.</title>
        <authorList>
            <person name="Lebrun J.J."/>
            <person name="Takabe K."/>
            <person name="Chen Y."/>
            <person name="Vale W."/>
        </authorList>
    </citation>
    <scope>INTERACTION WITH ACVR1B</scope>
    <scope>FUNCTION</scope>
</reference>
<reference key="16">
    <citation type="journal article" date="2000" name="J. Biol. Chem.">
        <title>Structural and functional characterization of the transforming growth factor-beta -induced Smad3/c-Jun transcriptional cooperativity.</title>
        <authorList>
            <person name="Qing J."/>
            <person name="Zhang Y."/>
            <person name="Derynck R."/>
        </authorList>
    </citation>
    <scope>INTERACTION WITH JUN IN THE SMAD3/SMAD4/JUN/FOS COMPLEX</scope>
    <scope>DNA-BINDING</scope>
    <scope>FUNCTION</scope>
    <scope>MUTAGENESIS OF LYS-40; LYS-41; LYS-43; LYS-44 AND ARG-74</scope>
</reference>
<reference key="17">
    <citation type="journal article" date="2001" name="EMBO J.">
        <title>The adaptor molecule Disabled-2 links the transforming growth factor beta receptors to the Smad pathway.</title>
        <authorList>
            <person name="Hocevar B.A."/>
            <person name="Smine A."/>
            <person name="Xu X.X."/>
            <person name="Howe P.H."/>
        </authorList>
    </citation>
    <scope>INTERACTION WITH DAB2</scope>
</reference>
<reference key="18">
    <citation type="journal article" date="2001" name="J. Biol. Chem.">
        <title>Ski-interacting protein interacts with Smad proteins to augment transforming growth factor-beta-dependent transcription.</title>
        <authorList>
            <person name="Leong G.M."/>
            <person name="Subramaniam N."/>
            <person name="Figueroa J."/>
            <person name="Flanagan J.L."/>
            <person name="Hayman M.J."/>
            <person name="Eisman J.A."/>
            <person name="Kouzmenko A.P."/>
        </authorList>
    </citation>
    <scope>INTERACTION WITH SNW1</scope>
</reference>
<reference key="19">
    <citation type="journal article" date="2001" name="J. Biol. Chem.">
        <title>TGIF2 interacts with histone deacetylase 1 and represses transcription.</title>
        <authorList>
            <person name="Melhuish T.A."/>
            <person name="Gallo C.M."/>
            <person name="Wotton D."/>
        </authorList>
    </citation>
    <scope>INTERACTION WITH TGIF2</scope>
</reference>
<reference key="20">
    <citation type="journal article" date="2001" name="Nat. Struct. Biol.">
        <title>The L3 loop and C-terminal phosphorylation jointly define Smad protein trimerization.</title>
        <authorList>
            <person name="Chacko B.M."/>
            <person name="Qin B."/>
            <person name="Correia J.J."/>
            <person name="Lam S.S."/>
            <person name="de Caestecker M.P."/>
            <person name="Lin K."/>
        </authorList>
    </citation>
    <scope>SUBUNIT</scope>
    <scope>PHOSPHORYLATION</scope>
    <scope>MUTAGENESIS OF 422-SER--SER-425</scope>
</reference>
<reference key="21">
    <citation type="journal article" date="2001" name="Proc. Natl. Acad. Sci. U.S.A.">
        <title>Inactivation of menin, a Smad3-interacting protein, blocks transforming growth factor type beta signaling.</title>
        <authorList>
            <person name="Kaji H."/>
            <person name="Canaff L."/>
            <person name="Lebrun J.J."/>
            <person name="Goltzman D."/>
            <person name="Hendy G.N."/>
        </authorList>
    </citation>
    <scope>INTERACTION WITH MEN1</scope>
</reference>
<reference key="22">
    <citation type="journal article" date="2002" name="Mol. Cell. Biol.">
        <title>Identification of mZnf8, a mouse Kruppel-like transcriptional repressor, as a novel nuclear interaction partner of Smad1.</title>
        <authorList>
            <person name="Jiao K."/>
            <person name="Zhou Y."/>
            <person name="Hogan B.L.M."/>
        </authorList>
    </citation>
    <scope>INTERACTION WITH ZNF8</scope>
</reference>
<reference key="23">
    <citation type="journal article" date="2003" name="J. Biol. Chem.">
        <title>DACH1 inhibits transforming growth factor-beta signaling through binding Smad4.</title>
        <authorList>
            <person name="Wu K."/>
            <person name="Yang Y."/>
            <person name="Wang C."/>
            <person name="Davoli M.A."/>
            <person name="D'Amico M."/>
            <person name="Li A."/>
            <person name="Cveklova K."/>
            <person name="Kozmik Z."/>
            <person name="Lisanti M.P."/>
            <person name="Russell R.G."/>
            <person name="Cvekl A."/>
            <person name="Pestell R.G."/>
        </authorList>
    </citation>
    <scope>INTERACTION WITH DACH1</scope>
</reference>
<reference key="24">
    <citation type="journal article" date="2004" name="J. Biol. Chem.">
        <title>Atrophin-1-interacting protein 4/human Itch is a ubiquitin E3 ligase for human enhancer of filamentation 1 in transforming growth factor-beta signaling pathways.</title>
        <authorList>
            <person name="Feng L."/>
            <person name="Guedes S."/>
            <person name="Wang T."/>
        </authorList>
    </citation>
    <scope>IDENTIFICATION IN A COMPLEX WITH NEDD9 AND ITCH</scope>
    <scope>INTERACTION WITH NEDD9</scope>
</reference>
<reference key="25">
    <citation type="journal article" date="2004" name="Nature">
        <title>Cyclin-dependent kinases regulate the antiproliferative function of Smads.</title>
        <authorList>
            <person name="Matsuura I."/>
            <person name="Denissova N.G."/>
            <person name="Wang G."/>
            <person name="He D."/>
            <person name="Long J."/>
            <person name="Liu F."/>
        </authorList>
    </citation>
    <scope>PHOSPHORYLATION AT THR-8; THR-179; SER-204; SER-208 AND SER-213</scope>
    <scope>FUNCTION</scope>
    <scope>MUTAGENESIS OF THR-8; THR-179; SER-204; SER-208 AND SER-213</scope>
</reference>
<reference key="26">
    <citation type="journal article" date="2005" name="Biochem. J.">
        <title>The Smad3 linker region contains a transcriptional activation domain.</title>
        <authorList>
            <person name="Wang G."/>
            <person name="Long J."/>
            <person name="Matsuura I."/>
            <person name="He D."/>
            <person name="Liu F."/>
        </authorList>
    </citation>
    <scope>TRANSCRIPTIONAL ACTIVATION DOMAIN</scope>
    <scope>FUNCTION</scope>
    <scope>PHOSPHORYLATION</scope>
    <scope>SUBUNIT</scope>
    <scope>INTERACTION WITH EP300</scope>
</reference>
<reference key="27">
    <citation type="journal article" date="2005" name="Biochemistry">
        <title>Identification and characterization of ERK MAP kinase phosphorylation sites in Smad3.</title>
        <authorList>
            <person name="Matsuura I."/>
            <person name="Wang G."/>
            <person name="He D."/>
            <person name="Liu F."/>
        </authorList>
    </citation>
    <scope>PHOSPHORYLATION AT THR-179; SER-204 AND SER-208</scope>
    <scope>SUBCELLULAR LOCATION</scope>
    <scope>FUNCTION</scope>
    <scope>MUTAGENESIS OF THR-179; SER-204 AND SER-208</scope>
</reference>
<reference key="28">
    <citation type="journal article" date="2005" name="Hum. Mol. Genet.">
        <title>MAN1, an integral protein of the inner nuclear membrane, binds Smad2 and Smad3 and antagonizes transforming growth factor-beta signaling.</title>
        <authorList>
            <person name="Lin F."/>
            <person name="Morrison J.M."/>
            <person name="Wu W."/>
            <person name="Worman H.J."/>
        </authorList>
    </citation>
    <scope>SUBCELLULAR LOCATION</scope>
    <scope>INTERACTION WITH LEMD3</scope>
</reference>
<reference key="29">
    <citation type="journal article" date="2005" name="J. Biol. Chem.">
        <title>Novel function of androgen receptor-associated protein 55/Hic-5 as a negative regulator of Smad3 signaling.</title>
        <authorList>
            <person name="Wang H."/>
            <person name="Song K."/>
            <person name="Sponseller T.L."/>
            <person name="Danielpour D."/>
        </authorList>
    </citation>
    <scope>INTERACTION WITH TGFB1I1</scope>
</reference>
<reference key="30">
    <citation type="journal article" date="2005" name="J. Biol. Chem.">
        <title>The integral inner nuclear membrane protein MAN1 physically interacts with the R-Smad proteins to repress signaling by the transforming growth factor-{beta} superfamily of cytokines.</title>
        <authorList>
            <person name="Pan D."/>
            <person name="Estevez-Salmeron L.D."/>
            <person name="Stroschein S.L."/>
            <person name="Zhu X."/>
            <person name="He J."/>
            <person name="Zhou S."/>
            <person name="Luo K."/>
        </authorList>
    </citation>
    <scope>INTERACTION WITH LEMD3</scope>
</reference>
<reference key="31">
    <citation type="journal article" date="2005" name="J. Biol. Chem.">
        <title>Nuclear targeting of transforming growth factor-beta-activated Smad complexes.</title>
        <authorList>
            <person name="Chen H.B."/>
            <person name="Rud J.G."/>
            <person name="Lin K."/>
            <person name="Xu L."/>
        </authorList>
    </citation>
    <scope>SUBUNIT</scope>
    <scope>SUBCELLULAR LOCATION</scope>
</reference>
<reference key="32">
    <citation type="journal article" date="2005" name="Lab. Invest.">
        <title>Cloning and functional characterization of a new Ski homolog, Fussel-18, specifically expressed in neuronal tissues.</title>
        <authorList>
            <person name="Arndt S."/>
            <person name="Poser I."/>
            <person name="Schubert T."/>
            <person name="Moser M."/>
            <person name="Bosserhoff A.-K."/>
        </authorList>
    </citation>
    <scope>INTERACTION WITH SKOR2</scope>
</reference>
<reference key="33">
    <citation type="journal article" date="2005" name="Oncogene">
        <title>Oligomerization of Evi-1 regulated by the PR domain contributes to recruitment of corepressor CtBP.</title>
        <authorList>
            <person name="Nitta E."/>
            <person name="Izutsu K."/>
            <person name="Yamaguchi Y."/>
            <person name="Imai Y."/>
            <person name="Ogawa S."/>
            <person name="Chiba S."/>
            <person name="Kurokawa M."/>
            <person name="Hirai H."/>
        </authorList>
    </citation>
    <scope>INTERACTION WITH MECOM</scope>
</reference>
<reference key="34">
    <citation type="journal article" date="2006" name="Cell">
        <title>PPM1A functions as a Smad phosphatase to terminate TGFbeta signaling.</title>
        <authorList>
            <person name="Lin X."/>
            <person name="Duan X."/>
            <person name="Liang Y.Y."/>
            <person name="Su Y."/>
            <person name="Wrighton K.H."/>
            <person name="Long J."/>
            <person name="Hu M."/>
            <person name="Davis C.M."/>
            <person name="Wang J."/>
            <person name="Brunicardi F.C."/>
            <person name="Shi Y."/>
            <person name="Chen Y.G."/>
            <person name="Meng A."/>
            <person name="Feng X.H."/>
        </authorList>
    </citation>
    <scope>INTERACTION WITH PPM1A</scope>
    <scope>DEPHOSPHORYLATION</scope>
    <scope>FUNCTION</scope>
    <scope>SUBCELLULAR LOCATION</scope>
</reference>
<reference key="35">
    <citation type="journal article" date="2006" name="Cell">
        <title>Hematopoiesis controlled by distinct TIF1gamma and Smad4 branches of the TGFbeta pathway.</title>
        <authorList>
            <person name="He W."/>
            <person name="Dorn D.C."/>
            <person name="Erdjument-Bromage H."/>
            <person name="Tempst P."/>
            <person name="Moore M.A."/>
            <person name="Massague J."/>
        </authorList>
    </citation>
    <scope>IDENTIFICATION IN A COMPLEX WITH SMAD2 AND TRIM33</scope>
    <scope>INTERACTION WITH SMAD2 AND TRIM33</scope>
</reference>
<reference key="36">
    <citation type="journal article" date="2006" name="J. Biol. Chem.">
        <title>The novel PIAS-like protein hZimp10 enhances Smad transcriptional activity.</title>
        <authorList>
            <person name="Li X."/>
            <person name="Thyssen G."/>
            <person name="Beliakoff J."/>
            <person name="Sun Z."/>
        </authorList>
    </citation>
    <scope>INTERACTION WITH ZMIZ1</scope>
</reference>
<reference key="37">
    <citation type="journal article" date="2006" name="Mol. Cell. Biol.">
        <title>The mechanism of nuclear export of Smad3 involves exportin 4 and Ran.</title>
        <authorList>
            <person name="Kurisaki A."/>
            <person name="Kurisaki K."/>
            <person name="Kowanetz M."/>
            <person name="Sugino H."/>
            <person name="Yoneda Y."/>
            <person name="Heldin C.-H."/>
            <person name="Moustakas A."/>
        </authorList>
    </citation>
    <scope>IDENTIFICATION IN A COMPLEX WITH RAN AND XPO4</scope>
    <scope>INTERACTION WITH XPO4</scope>
    <scope>MUTAGENESIS OF 422-SER--SER-425</scope>
</reference>
<reference key="38">
    <citation type="journal article" date="2006" name="Nucleic Acids Res.">
        <title>Potentiation of Smad-mediated transcriptional activation by the RNA-binding protein RBPMS.</title>
        <authorList>
            <person name="Sun Y."/>
            <person name="Ding L."/>
            <person name="Zhang H."/>
            <person name="Han J."/>
            <person name="Yang X."/>
            <person name="Yan J."/>
            <person name="Zhu Y."/>
            <person name="Li J."/>
            <person name="Song H."/>
            <person name="Ye Q."/>
        </authorList>
    </citation>
    <scope>INTERACTION WITH RBPMS</scope>
</reference>
<reference key="39">
    <citation type="journal article" date="2007" name="J. Biol. Chem.">
        <title>3-Phosphoinositide-dependent PDK1 negatively regulates transforming growth factor-beta-induced signaling in a kinase-dependent manner through physical interaction with Smad proteins.</title>
        <authorList>
            <person name="Seong H.A."/>
            <person name="Jung H."/>
            <person name="Kim K.T."/>
            <person name="Ha H."/>
        </authorList>
    </citation>
    <scope>FUNCTION</scope>
    <scope>SUBCELLULAR LOCATION</scope>
    <scope>PHOSPHORYLATION BY PDPK1</scope>
    <scope>INTERACTION WITH PDPK1</scope>
</reference>
<reference key="40">
    <citation type="journal article" date="2007" name="Mol. Cell. Neurosci.">
        <title>Fussel-15, a novel Ski/Sno homolog protein, antagonizes BMP signaling.</title>
        <authorList>
            <person name="Arndt S."/>
            <person name="Poser I."/>
            <person name="Moser M."/>
            <person name="Bosserhoff A.-K."/>
        </authorList>
    </citation>
    <scope>INTERACTION WITH SKOR1</scope>
</reference>
<reference key="41">
    <citation type="journal article" date="2007" name="Oncogene">
        <title>Smad3 is acetylated by p300/CBP to regulate its transactivation activity.</title>
        <authorList>
            <person name="Inoue Y."/>
            <person name="Itoh Y."/>
            <person name="Abe K."/>
            <person name="Okamoto T."/>
            <person name="Daitoku H."/>
            <person name="Fukamizu A."/>
            <person name="Onozaki K."/>
            <person name="Hayashi H."/>
        </authorList>
    </citation>
    <scope>ACETYLATION AT LYS-378</scope>
    <scope>FUNCTION</scope>
    <scope>MUTAGENESIS OF LYS-333; LYS-341; LYS-378; LYS-409 AND 422-SER--SER-425</scope>
</reference>
<reference key="42">
    <citation type="journal article" date="2008" name="Nat. Cell Biol.">
        <title>TAZ controls Smad nucleocytoplasmic shuttling and regulates human embryonic stem-cell self-renewal.</title>
        <authorList>
            <person name="Varelas X."/>
            <person name="Sakuma R."/>
            <person name="Samavarchi-Tehrani P."/>
            <person name="Peerani R."/>
            <person name="Rao B.M."/>
            <person name="Dembowy J."/>
            <person name="Yaffe M.B."/>
            <person name="Zandstra P.W."/>
            <person name="Wrana J.L."/>
        </authorList>
    </citation>
    <scope>INTERACTION WITH WWTR1</scope>
</reference>
<reference key="43">
    <citation type="journal article" date="2008" name="J. Biol. Chem.">
        <title>Severe acute respiratory syndrome-associated coronavirus nucleocapsid protein interacts with Smad3 and modulates transforming growth factor-beta signaling.</title>
        <authorList>
            <person name="Zhao X."/>
            <person name="Nicholls J.M."/>
            <person name="Chen Y.G."/>
        </authorList>
    </citation>
    <scope>INTERACTION WITH SARS-COV NUCLEOPROTEIN (MICROBIAL INFECTION)</scope>
</reference>
<reference key="44">
    <citation type="journal article" date="2008" name="Oncogene">
        <title>Ligand-dependent ubiquitination of Smad3 is regulated by casein kinase 1 gamma 2, an inhibitor of TGF-beta signaling.</title>
        <authorList>
            <person name="Guo X."/>
            <person name="Waddell D.S."/>
            <person name="Wang W."/>
            <person name="Wang Z."/>
            <person name="Liberati N.T."/>
            <person name="Yong S."/>
            <person name="Liu X."/>
            <person name="Wang X.-F."/>
        </authorList>
    </citation>
    <scope>INTERACTION WITH CSNK1G2</scope>
    <scope>UBIQUITINATION</scope>
    <scope>PHOSPHORYLATION AT SER-418 BY CSNK1G2/CK1</scope>
    <scope>MUTAGENESIS OF SER-418</scope>
</reference>
<reference key="45">
    <citation type="journal article" date="2008" name="Proc. Natl. Acad. Sci. U.S.A.">
        <title>A quantitative atlas of mitotic phosphorylation.</title>
        <authorList>
            <person name="Dephoure N."/>
            <person name="Zhou C."/>
            <person name="Villen J."/>
            <person name="Beausoleil S.A."/>
            <person name="Bakalarski C.E."/>
            <person name="Elledge S.J."/>
            <person name="Gygi S.P."/>
        </authorList>
    </citation>
    <scope>PHOSPHORYLATION [LARGE SCALE ANALYSIS] AT SER-416</scope>
    <scope>IDENTIFICATION BY MASS SPECTROMETRY [LARGE SCALE ANALYSIS]</scope>
    <source>
        <tissue>Cervix carcinoma</tissue>
    </source>
</reference>
<reference key="46">
    <citation type="journal article" date="2009" name="Anal. Chem.">
        <title>Lys-N and trypsin cover complementary parts of the phosphoproteome in a refined SCX-based approach.</title>
        <authorList>
            <person name="Gauci S."/>
            <person name="Helbig A.O."/>
            <person name="Slijper M."/>
            <person name="Krijgsveld J."/>
            <person name="Heck A.J."/>
            <person name="Mohammed S."/>
        </authorList>
    </citation>
    <scope>ACETYLATION [LARGE SCALE ANALYSIS] AT SER-2</scope>
    <scope>CLEAVAGE OF INITIATOR METHIONINE [LARGE SCALE ANALYSIS]</scope>
    <scope>IDENTIFICATION BY MASS SPECTROMETRY [LARGE SCALE ANALYSIS]</scope>
</reference>
<reference key="47">
    <citation type="journal article" date="2009" name="Dev. Cell">
        <title>Nuclear export of Smad2 and Smad3 by RanBP3 facilitates termination of TGF-beta signaling.</title>
        <authorList>
            <person name="Dai F."/>
            <person name="Lin X."/>
            <person name="Chang C."/>
            <person name="Feng X.H."/>
        </authorList>
    </citation>
    <scope>INTERACTION WITH RANBP3</scope>
    <scope>SUBCELLULAR LOCATION</scope>
    <scope>FUNCTION</scope>
</reference>
<reference key="48">
    <citation type="journal article" date="2009" name="J. Biol. Chem.">
        <title>SKI and MEL1 cooperate to inhibit transforming growth factor-beta signal in gastric cancer cells.</title>
        <authorList>
            <person name="Takahata M."/>
            <person name="Inoue Y."/>
            <person name="Tsuda H."/>
            <person name="Imoto I."/>
            <person name="Koinuma D."/>
            <person name="Hayashi M."/>
            <person name="Ichikura T."/>
            <person name="Yamori T."/>
            <person name="Nagasaki K."/>
            <person name="Yoshida M."/>
            <person name="Matsuoka M."/>
            <person name="Morishita K."/>
            <person name="Yuki K."/>
            <person name="Hanyu A."/>
            <person name="Miyazawa K."/>
            <person name="Inazawa J."/>
            <person name="Miyazono K."/>
            <person name="Imamura T."/>
        </authorList>
    </citation>
    <scope>INTERACTION WITH PRDM16; SKI AND HDAC1</scope>
</reference>
<reference key="49">
    <citation type="journal article" date="2009" name="J. Biol. Chem.">
        <title>Transforming growth factor-{beta}-inducible phosphorylation of Smad3.</title>
        <authorList>
            <person name="Wang G."/>
            <person name="Matsuura I."/>
            <person name="He D."/>
            <person name="Liu F."/>
        </authorList>
    </citation>
    <scope>PHOSPHORYLATION AT THR-179; SER-204 AND SER-208</scope>
    <scope>SUBCELLULAR LOCATION</scope>
    <scope>FUNCTION</scope>
    <scope>MUTAGENESIS OF THR-179; SER-204 AND SER-208</scope>
</reference>
<reference key="50">
    <citation type="journal article" date="2010" name="Dev. Cell">
        <title>The Crumbs complex couples cell density sensing to Hippo-dependent control of the TGF-beta-SMAD pathway.</title>
        <authorList>
            <person name="Varelas X."/>
            <person name="Samavarchi-Tehrani P."/>
            <person name="Narimatsu M."/>
            <person name="Weiss A."/>
            <person name="Cockburn K."/>
            <person name="Larsen B.G."/>
            <person name="Rossant J."/>
            <person name="Wrana J.L."/>
        </authorList>
    </citation>
    <scope>SUBCELLULAR LOCATION</scope>
</reference>
<reference key="51">
    <citation type="journal article" date="2010" name="J. Biol. Chem.">
        <title>MTMR4 attenuates transforming growth factor beta (TGFbeta) signaling by dephosphorylating R-Smads in endosomes.</title>
        <authorList>
            <person name="Yu J."/>
            <person name="Pan L."/>
            <person name="Qin X."/>
            <person name="Chen H."/>
            <person name="Xu Y."/>
            <person name="Chen Y."/>
            <person name="Tang H."/>
        </authorList>
    </citation>
    <scope>INTERACTION WITH MTMR4</scope>
</reference>
<reference key="52">
    <citation type="journal article" date="2010" name="Mol. Cell">
        <title>TMEPAI, a transmembrane TGF-beta-inducible protein, sequesters Smad proteins from active participation in TGF-beta signaling.</title>
        <authorList>
            <person name="Watanabe Y."/>
            <person name="Itoh S."/>
            <person name="Goto T."/>
            <person name="Ohnishi E."/>
            <person name="Inamitsu M."/>
            <person name="Itoh F."/>
            <person name="Satoh K."/>
            <person name="Wiercinska E."/>
            <person name="Yang W."/>
            <person name="Shi L."/>
            <person name="Tanaka A."/>
            <person name="Nakano N."/>
            <person name="Mommaas A.M."/>
            <person name="Shibuya H."/>
            <person name="Ten Dijke P."/>
            <person name="Kato M."/>
        </authorList>
    </citation>
    <scope>INTERACTION WITH PMEPA1</scope>
</reference>
<reference key="53">
    <citation type="journal article" date="2010" name="Nat. Immunol.">
        <title>IL-37 is a fundamental inhibitor of innate immunity.</title>
        <authorList>
            <person name="Nold M.F."/>
            <person name="Nold-Petry C.A."/>
            <person name="Zepp J.A."/>
            <person name="Palmer B.E."/>
            <person name="Bufler P."/>
            <person name="Dinarello C.A."/>
        </authorList>
    </citation>
    <scope>INTERACTION WITH IL1F7</scope>
</reference>
<reference key="54">
    <citation type="journal article" date="2011" name="BMC Syst. Biol.">
        <title>Initial characterization of the human central proteome.</title>
        <authorList>
            <person name="Burkard T.R."/>
            <person name="Planyavsky M."/>
            <person name="Kaupe I."/>
            <person name="Breitwieser F.P."/>
            <person name="Buerckstuemmer T."/>
            <person name="Bennett K.L."/>
            <person name="Superti-Furga G."/>
            <person name="Colinge J."/>
        </authorList>
    </citation>
    <scope>IDENTIFICATION BY MASS SPECTROMETRY [LARGE SCALE ANALYSIS]</scope>
</reference>
<reference key="55">
    <citation type="journal article" date="2011" name="Nat. Cell Biol.">
        <title>USP15 is a deubiquitylating enzyme for receptor-activated SMADs.</title>
        <authorList>
            <person name="Inui M."/>
            <person name="Manfrin A."/>
            <person name="Mamidi A."/>
            <person name="Martello G."/>
            <person name="Morsut L."/>
            <person name="Soligo S."/>
            <person name="Enzo E."/>
            <person name="Moro S."/>
            <person name="Polo S."/>
            <person name="Dupont S."/>
            <person name="Cordenonsi M."/>
            <person name="Piccolo S."/>
        </authorList>
    </citation>
    <scope>UBIQUITINATION</scope>
    <scope>DEUBIQUITINATION BY USP15</scope>
    <scope>DNA-BINDING</scope>
    <scope>INTERACTION WITH USP15</scope>
    <scope>UBIQUITINATION AT LYS-33 AND LYS-81</scope>
    <scope>MUTAGENESIS OF LYS-33; LYS-53 AND LYS-81</scope>
</reference>
<reference key="56">
    <citation type="journal article" date="2012" name="Cell. Signal.">
        <title>Protein phosphatase 5 modulates SMAD3 function in the transforming growth factor-beta pathway.</title>
        <authorList>
            <person name="Bruce D.L."/>
            <person name="Macartney T."/>
            <person name="Yong W."/>
            <person name="Shou W."/>
            <person name="Sapkota G.P."/>
        </authorList>
    </citation>
    <scope>INTERACTION WITH PPP5C</scope>
    <scope>SUBCELLULAR LOCATION</scope>
</reference>
<reference key="57">
    <citation type="journal article" date="2012" name="Proc. Natl. Acad. Sci. U.S.A.">
        <title>N-terminal acetylome analyses and functional insights of the N-terminal acetyltransferase NatB.</title>
        <authorList>
            <person name="Van Damme P."/>
            <person name="Lasa M."/>
            <person name="Polevoda B."/>
            <person name="Gazquez C."/>
            <person name="Elosegui-Artola A."/>
            <person name="Kim D.S."/>
            <person name="De Juan-Pardo E."/>
            <person name="Demeyer K."/>
            <person name="Hole K."/>
            <person name="Larrea E."/>
            <person name="Timmerman E."/>
            <person name="Prieto J."/>
            <person name="Arnesen T."/>
            <person name="Sherman F."/>
            <person name="Gevaert K."/>
            <person name="Aldabe R."/>
        </authorList>
    </citation>
    <scope>ACETYLATION [LARGE SCALE ANALYSIS] AT SER-2</scope>
    <scope>CLEAVAGE OF INITIATOR METHIONINE [LARGE SCALE ANALYSIS]</scope>
    <scope>IDENTIFICATION BY MASS SPECTROMETRY [LARGE SCALE ANALYSIS]</scope>
</reference>
<reference key="58">
    <citation type="journal article" date="2013" name="J. Proteome Res.">
        <title>Toward a comprehensive characterization of a human cancer cell phosphoproteome.</title>
        <authorList>
            <person name="Zhou H."/>
            <person name="Di Palma S."/>
            <person name="Preisinger C."/>
            <person name="Peng M."/>
            <person name="Polat A.N."/>
            <person name="Heck A.J."/>
            <person name="Mohammed S."/>
        </authorList>
    </citation>
    <scope>PHOSPHORYLATION [LARGE SCALE ANALYSIS] AT SER-416</scope>
    <scope>IDENTIFICATION BY MASS SPECTROMETRY [LARGE SCALE ANALYSIS]</scope>
    <source>
        <tissue>Erythroleukemia</tissue>
    </source>
</reference>
<reference key="59">
    <citation type="journal article" date="2014" name="Biochem. Biophys. Res. Commun.">
        <title>Hsp70 and Hsp90 oppositely regulate TGF-beta signaling through CHIP/Stub1.</title>
        <authorList>
            <person name="Shang Y."/>
            <person name="Xu X."/>
            <person name="Duan X."/>
            <person name="Guo J."/>
            <person name="Wang Y."/>
            <person name="Ren F."/>
            <person name="He D."/>
            <person name="Chang Z."/>
        </authorList>
    </citation>
    <scope>INTERACTION WITH STUB1; HSPA1A; HSPA1B; HSP90AA1 AND HSP90AB1</scope>
    <scope>UBIQUITINATION</scope>
    <scope>PROTEASOMAL DEGRADATION</scope>
</reference>
<reference key="60">
    <citation type="journal article" date="2014" name="J. Biol. Chem.">
        <title>Zinc finger protein 451 is a novel Smad corepressor in transforming growth factor-beta signaling.</title>
        <authorList>
            <person name="Feng Y."/>
            <person name="Wu H."/>
            <person name="Xu Y."/>
            <person name="Zhang Z."/>
            <person name="Liu T."/>
            <person name="Lin X."/>
            <person name="Feng X.H."/>
        </authorList>
    </citation>
    <scope>INTERACTION WITH ZNF451</scope>
    <scope>IDENTIFICATION IN A COMPLEX WITH ZNF451; SMAD2 AND SMAD4</scope>
</reference>
<reference key="61">
    <citation type="journal article" date="2014" name="J. Biol. Chem.">
        <title>C18 ORF1, a novel negative regulator of transforming growth factor-beta signaling.</title>
        <authorList>
            <person name="Nakano N."/>
            <person name="Maeyama K."/>
            <person name="Sakata N."/>
            <person name="Itoh F."/>
            <person name="Akatsu R."/>
            <person name="Nakata M."/>
            <person name="Katsu Y."/>
            <person name="Ikeno S."/>
            <person name="Togawa Y."/>
            <person name="Vo Nguyen T.T."/>
            <person name="Watanabe Y."/>
            <person name="Kato M."/>
            <person name="Itoh S."/>
        </authorList>
    </citation>
    <scope>INTERACTION WITH LDLRAD4</scope>
</reference>
<reference key="62">
    <citation type="journal article" date="2014" name="J. Signal Transduct.">
        <title>TGF-beta signaling cooperates with AT motif-binding factor-1 for repression of the alpha -fetoprotein promoter.</title>
        <authorList>
            <person name="Sakata N."/>
            <person name="Kaneko S."/>
            <person name="Ikeno S."/>
            <person name="Miura Y."/>
            <person name="Nakabayashi H."/>
            <person name="Dong X.Y."/>
            <person name="Dong J.T."/>
            <person name="Tamaoki T."/>
            <person name="Nakano N."/>
            <person name="Itoh S."/>
        </authorList>
    </citation>
    <scope>INTERACTION WITH ZFHX3</scope>
</reference>
<reference key="63">
    <citation type="journal article" date="2014" name="PLoS ONE">
        <title>Fine-tuning of Smad protein function by poly(ADP-ribose) polymerases and poly(ADP-ribose) glycohydrolase during transforming growth factor beta Signaling.</title>
        <authorList>
            <person name="Dahl M."/>
            <person name="Maturi V."/>
            <person name="Lonn P."/>
            <person name="Papoutsoglou P."/>
            <person name="Zieba A."/>
            <person name="Vanlandewijck M."/>
            <person name="van der Heide L.P."/>
            <person name="Watanabe Y."/>
            <person name="Soderberg O."/>
            <person name="Hottiger M.O."/>
            <person name="Heldin C.H."/>
            <person name="Moustakas A."/>
        </authorList>
    </citation>
    <scope>ADP-RIBOSYLATION</scope>
</reference>
<reference key="64">
    <citation type="journal article" date="2018" name="Sci. Transl. Med.">
        <title>NEDD9 targets COL3A1 to promote endothelial fibrosis and pulmonary arterial hypertension.</title>
        <authorList>
            <person name="Samokhin A.O."/>
            <person name="Stephens T."/>
            <person name="Wertheim B.M."/>
            <person name="Wang R.S."/>
            <person name="Vargas S.O."/>
            <person name="Yung L.M."/>
            <person name="Cao M."/>
            <person name="Brown M."/>
            <person name="Arons E."/>
            <person name="Dieffenbach P.B."/>
            <person name="Fewell J.G."/>
            <person name="Matar M."/>
            <person name="Bowman F.P."/>
            <person name="Haley K.J."/>
            <person name="Alba G.A."/>
            <person name="Marino S.M."/>
            <person name="Kumar R."/>
            <person name="Rosas I.O."/>
            <person name="Waxman A.B."/>
            <person name="Oldham W.M."/>
            <person name="Khanna D."/>
            <person name="Graham B.B."/>
            <person name="Seo S."/>
            <person name="Gladyshev V.N."/>
            <person name="Yu P.B."/>
            <person name="Fredenburgh L.E."/>
            <person name="Loscalzo J."/>
            <person name="Leopold J.A."/>
            <person name="Maron B.A."/>
        </authorList>
    </citation>
    <scope>INTERACTION WITH NEDD9</scope>
</reference>
<reference key="65">
    <citation type="journal article" date="1998" name="Cell">
        <title>Crystal structure of a Smad MH1 domain bound to DNA: insights on DNA binding in TGF-beta signaling.</title>
        <authorList>
            <person name="Shi Y."/>
            <person name="Wang Y.-F."/>
            <person name="Jayaraman L."/>
            <person name="Yang H."/>
            <person name="Massague J."/>
            <person name="Pavletich N.P."/>
        </authorList>
    </citation>
    <scope>X-RAY CRYSTALLOGRAPHY (2.8 ANGSTROMS) OF 1-144</scope>
</reference>
<reference key="66">
    <citation type="journal article" date="2002" name="Genes Dev.">
        <title>Smad3 allostery links TGF-beta receptor kinase activation to transcriptional control.</title>
        <authorList>
            <person name="Qin B.Y."/>
            <person name="Lam S.S."/>
            <person name="Correia J.J."/>
            <person name="Lin K."/>
        </authorList>
    </citation>
    <scope>X-RAY CRYSTALLOGRAPHY (2.74 ANGSTROMS) OF 220-425 IN COMPLEX WITH ZFYVE9</scope>
</reference>
<reference key="67">
    <citation type="journal article" date="2003" name="J. Biol. Chem.">
        <title>Features of a Smad3 MH1-DNA complex. Roles of water and zinc in DNA binding.</title>
        <authorList>
            <person name="Chai J."/>
            <person name="Wu J.W."/>
            <person name="Yan N."/>
            <person name="Massague J."/>
            <person name="Pavletich N.P."/>
            <person name="Shi Y."/>
        </authorList>
    </citation>
    <scope>X-RAY CRYSTALLOGRAPHY (2.4 ANGSTROMS) OF 1-144 IN COMPLEX WITH DNA</scope>
    <scope>ZINC</scope>
</reference>
<reference key="68">
    <citation type="journal article" date="2004" name="Mol. Cell">
        <title>Structural basis of heteromeric smad protein assembly in TGF-beta signaling.</title>
        <authorList>
            <person name="Chacko B.M."/>
            <person name="Qin B.Y."/>
            <person name="Tiwari A."/>
            <person name="Shi G."/>
            <person name="Lam S."/>
            <person name="Hayward L.J."/>
            <person name="De Caestecker M."/>
            <person name="Lin K."/>
        </authorList>
    </citation>
    <scope>X-RAY CRYSTALLOGRAPHY (2.6 ANGSTROMS) OF 228-424 IN COMPLEX WITH SMAD4</scope>
    <scope>SUBUNIT</scope>
</reference>
<reference key="69">
    <citation type="journal article" date="2006" name="Science">
        <title>The consensus coding sequences of human breast and colorectal cancers.</title>
        <authorList>
            <person name="Sjoeblom T."/>
            <person name="Jones S."/>
            <person name="Wood L.D."/>
            <person name="Parsons D.W."/>
            <person name="Lin J."/>
            <person name="Barber T.D."/>
            <person name="Mandelker D."/>
            <person name="Leary R.J."/>
            <person name="Ptak J."/>
            <person name="Silliman N."/>
            <person name="Szabo S."/>
            <person name="Buckhaults P."/>
            <person name="Farrell C."/>
            <person name="Meeh P."/>
            <person name="Markowitz S.D."/>
            <person name="Willis J."/>
            <person name="Dawson D."/>
            <person name="Willson J.K.V."/>
            <person name="Gazdar A.F."/>
            <person name="Hartigan J."/>
            <person name="Wu L."/>
            <person name="Liu C."/>
            <person name="Parmigiani G."/>
            <person name="Park B.H."/>
            <person name="Bachman K.E."/>
            <person name="Papadopoulos N."/>
            <person name="Vogelstein B."/>
            <person name="Kinzler K.W."/>
            <person name="Velculescu V.E."/>
        </authorList>
    </citation>
    <scope>VARIANT [LARGE SCALE ANALYSIS] LEU-393</scope>
    <scope>INVOLVEMENT IN COLORECTAL CANCER</scope>
</reference>
<reference key="70">
    <citation type="journal article" date="2011" name="Circ. Res.">
        <title>Exome sequencing identifies SMAD3 mutations as a cause of familial thoracic aortic aneurysm and dissection with intracranial and other arterial aneurysms.</title>
        <authorList>
            <person name="Regalado E.S."/>
            <person name="Guo D.C."/>
            <person name="Villamizar C."/>
            <person name="Avidan N."/>
            <person name="Gilchrist D."/>
            <person name="McGillivray B."/>
            <person name="Clarke L."/>
            <person name="Bernier F."/>
            <person name="Santos-Cortez R.L."/>
            <person name="Leal S.M."/>
            <person name="Bertoli-Avella A.M."/>
            <person name="Shendure J."/>
            <person name="Rieder M.J."/>
            <person name="Nickerson D.A."/>
            <person name="Milewicz D.M."/>
        </authorList>
    </citation>
    <scope>VARIANTS LDS3 VAL-112; LYS-239 AND LYS-279</scope>
</reference>
<reference key="71">
    <citation type="journal article" date="2011" name="Nat. Genet.">
        <title>Mutations in SMAD3 cause a syndromic form of aortic aneurysms and dissections with early-onset osteoarthritis.</title>
        <authorList>
            <person name="van de Laar I.M."/>
            <person name="Oldenburg R.A."/>
            <person name="Pals G."/>
            <person name="Roos-Hesselink J.W."/>
            <person name="de Graaf B.M."/>
            <person name="Verhagen J.M."/>
            <person name="Hoedemaekers Y.M."/>
            <person name="Willemsen R."/>
            <person name="Severijnen L.A."/>
            <person name="Venselaar H."/>
            <person name="Vriend G."/>
            <person name="Pattynama P.M."/>
            <person name="Collee M."/>
            <person name="Majoor-Krakauer D."/>
            <person name="Poldermans D."/>
            <person name="Frohn-Mulder I.M."/>
            <person name="Micha D."/>
            <person name="Timmermans J."/>
            <person name="Hilhorst-Hofstee Y."/>
            <person name="Bierma-Zeinstra S.M."/>
            <person name="Willems P.J."/>
            <person name="Kros J.M."/>
            <person name="Oei E.H."/>
            <person name="Oostra B.A."/>
            <person name="Wessels M.W."/>
            <person name="Bertoli-Avella A.M."/>
        </authorList>
    </citation>
    <scope>VARIANTS LDS3 ILE-261 AND TRP-287</scope>
</reference>
<feature type="initiator methionine" description="Removed" evidence="67 68">
    <location>
        <position position="1"/>
    </location>
</feature>
<feature type="chain" id="PRO_0000090856" description="Mothers against decapentaplegic homolog 3">
    <location>
        <begin position="2"/>
        <end position="425"/>
    </location>
</feature>
<feature type="domain" description="MH1" evidence="3">
    <location>
        <begin position="10"/>
        <end position="136"/>
    </location>
</feature>
<feature type="domain" description="MH2" evidence="4">
    <location>
        <begin position="232"/>
        <end position="425"/>
    </location>
</feature>
<feature type="region of interest" description="Linker">
    <location>
        <begin position="137"/>
        <end position="231"/>
    </location>
</feature>
<feature type="region of interest" description="Disordered" evidence="5">
    <location>
        <begin position="165"/>
        <end position="208"/>
    </location>
</feature>
<feature type="region of interest" description="Sufficient for interaction with XPO4" evidence="26">
    <location>
        <begin position="271"/>
        <end position="324"/>
    </location>
</feature>
<feature type="compositionally biased region" description="Polar residues" evidence="5">
    <location>
        <begin position="165"/>
        <end position="177"/>
    </location>
</feature>
<feature type="binding site">
    <location>
        <position position="64"/>
    </location>
    <ligand>
        <name>Zn(2+)</name>
        <dbReference type="ChEBI" id="CHEBI:29105"/>
    </ligand>
</feature>
<feature type="binding site">
    <location>
        <position position="109"/>
    </location>
    <ligand>
        <name>Zn(2+)</name>
        <dbReference type="ChEBI" id="CHEBI:29105"/>
    </ligand>
</feature>
<feature type="binding site">
    <location>
        <position position="121"/>
    </location>
    <ligand>
        <name>Zn(2+)</name>
        <dbReference type="ChEBI" id="CHEBI:29105"/>
    </ligand>
</feature>
<feature type="binding site">
    <location>
        <position position="126"/>
    </location>
    <ligand>
        <name>Zn(2+)</name>
        <dbReference type="ChEBI" id="CHEBI:29105"/>
    </ligand>
</feature>
<feature type="site" description="Required for trimerization">
    <location>
        <position position="40"/>
    </location>
</feature>
<feature type="site" description="Required for interaction with DNA and JUN and for functional cooperation with JUN">
    <location>
        <position position="41"/>
    </location>
</feature>
<feature type="modified residue" description="N-acetylserine" evidence="67 68">
    <location>
        <position position="2"/>
    </location>
</feature>
<feature type="modified residue" description="Phosphothreonine; by CDK2 and CDK4" evidence="16">
    <location>
        <position position="8"/>
    </location>
</feature>
<feature type="modified residue" description="Phosphothreonine; by CDK2, CDK4 and MAPK" evidence="16 24 39">
    <location>
        <position position="179"/>
    </location>
</feature>
<feature type="modified residue" description="Phosphoserine; by GSK3 and MAPK" evidence="4 16 24 39">
    <location>
        <position position="204"/>
    </location>
</feature>
<feature type="modified residue" description="Phosphoserine; by MAPK" evidence="4 16 24 39">
    <location>
        <position position="208"/>
    </location>
</feature>
<feature type="modified residue" description="Phosphoserine; by CDK2 and CDK4" evidence="4 16">
    <location>
        <position position="213"/>
    </location>
</feature>
<feature type="modified residue" description="N6-acetyllysine" evidence="30">
    <location>
        <position position="378"/>
    </location>
</feature>
<feature type="modified residue" description="Phosphoserine" evidence="66 69">
    <location>
        <position position="416"/>
    </location>
</feature>
<feature type="modified residue" description="Phosphoserine; by CK1" evidence="4 37">
    <location>
        <position position="418"/>
    </location>
</feature>
<feature type="modified residue" description="Phosphoserine; by TGFBR1" evidence="2 4">
    <location>
        <position position="422"/>
    </location>
</feature>
<feature type="modified residue" description="Phosphoserine; by TGFBR1" evidence="2 4">
    <location>
        <position position="423"/>
    </location>
</feature>
<feature type="modified residue" description="Phosphoserine; by TGFBR1" evidence="2 4">
    <location>
        <position position="425"/>
    </location>
</feature>
<feature type="cross-link" description="Glycyl lysine isopeptide (Lys-Gly) (interchain with G-Cter in ubiquitin)" evidence="65">
    <location>
        <position position="33"/>
    </location>
</feature>
<feature type="cross-link" description="Glycyl lysine isopeptide (Lys-Gly) (interchain with G-Cter in ubiquitin)" evidence="65">
    <location>
        <position position="81"/>
    </location>
</feature>
<feature type="splice variant" id="VSP_045348" description="In isoform 4." evidence="63">
    <location>
        <begin position="1"/>
        <end position="195"/>
    </location>
</feature>
<feature type="splice variant" id="VSP_043793" description="In isoform 3." evidence="63">
    <location>
        <begin position="1"/>
        <end position="105"/>
    </location>
</feature>
<feature type="splice variant" id="VSP_042900" description="In isoform 2." evidence="63">
    <original>MSSILPFTPPIVKRLLGWKKGEQNGQEEKWCEKAVKSLVKKLKKTGQLDELEKAITTQNVNTKCITIP</original>
    <variation>MSCLHPRQTWKGAALVHRKAWWMG</variation>
    <location>
        <begin position="1"/>
        <end position="68"/>
    </location>
</feature>
<feature type="sequence variant" id="VAR_067051" description="In LDS3; dbSNP:rs387906854." evidence="46">
    <original>A</original>
    <variation>V</variation>
    <location>
        <position position="112"/>
    </location>
</feature>
<feature type="sequence variant" id="VAR_052021" description="In dbSNP:rs35874463.">
    <original>I</original>
    <variation>V</variation>
    <location>
        <position position="170"/>
    </location>
</feature>
<feature type="sequence variant" id="VAR_067047" description="In LDS3; dbSNP:rs387906853." evidence="46">
    <original>E</original>
    <variation>K</variation>
    <location>
        <position position="239"/>
    </location>
</feature>
<feature type="sequence variant" id="VAR_065578" description="In LDS3; dbSNP:rs387906851." evidence="45">
    <original>T</original>
    <variation>I</variation>
    <location>
        <position position="261"/>
    </location>
</feature>
<feature type="sequence variant" id="VAR_067048" description="In LDS3; dbSNP:rs387906852." evidence="46">
    <original>R</original>
    <variation>K</variation>
    <location>
        <position position="279"/>
    </location>
</feature>
<feature type="sequence variant" id="VAR_065579" description="In LDS3; dbSNP:rs387906850." evidence="45">
    <original>R</original>
    <variation>W</variation>
    <location>
        <position position="287"/>
    </location>
</feature>
<feature type="sequence variant" id="VAR_036474" description="In a colorectal cancer sample; somatic mutation." evidence="31">
    <original>P</original>
    <variation>L</variation>
    <location>
        <position position="393"/>
    </location>
</feature>
<feature type="mutagenesis site" description="Reduced phosphorylation, increased transcriptional and antiproliferative activities. Further increase in transcriptional and antiproliferative activities; when associated with V-179 and A-213." evidence="16">
    <original>T</original>
    <variation>V</variation>
    <location>
        <position position="8"/>
    </location>
</feature>
<feature type="mutagenesis site" description="Slightly decreased monoubiquitination." evidence="47">
    <original>K</original>
    <variation>R</variation>
    <location>
        <position position="33"/>
    </location>
</feature>
<feature type="mutagenesis site" description="Little effect on interaction with DNA or JUN. Abolishes interaction with DNA and JUN; when associated with A-41; A-43 and A-44." evidence="6">
    <original>K</original>
    <variation>A</variation>
    <location>
        <position position="40"/>
    </location>
</feature>
<feature type="mutagenesis site" description="Greatly reduced interaction with DNA and JUN. Abolishes interaction with DNA and JUN; when associated with A-40; A-44 and A-43." evidence="6">
    <original>K</original>
    <variation>A</variation>
    <location>
        <position position="41"/>
    </location>
</feature>
<feature type="mutagenesis site" description="Little effect on interaction with DNA or JUN. Abolishes interaction with DNA and JUN; when associated with A-40; A-41 and A-44." evidence="6">
    <original>K</original>
    <variation>A</variation>
    <location>
        <position position="43"/>
    </location>
</feature>
<feature type="mutagenesis site" description="Little effect on interaction with DNA or JUN. Abolishes interaction with JUN; when associated with A-40; A-41 and A-43." evidence="6">
    <original>K</original>
    <variation>A</variation>
    <location>
        <position position="44"/>
    </location>
</feature>
<feature type="mutagenesis site" description="Slightly decreased monoubiquitination." evidence="47">
    <original>K</original>
    <variation>R</variation>
    <location>
        <position position="53"/>
    </location>
</feature>
<feature type="mutagenesis site" description="Reduced interaction with JUN. Loss of transcriptional activity and cooperation with JUN." evidence="6">
    <original>R</original>
    <variation>D</variation>
    <location>
        <position position="74"/>
    </location>
</feature>
<feature type="mutagenesis site" description="Decreased monoubiquitination." evidence="47">
    <original>K</original>
    <variation>R</variation>
    <location>
        <position position="81"/>
    </location>
</feature>
<feature type="mutagenesis site" description="Reduced phosphorylation, increased transcriptional and increased antiproliferative activities. Further increase in transcriptional and antiproliferative activities; when associated with V-8 and A-213." evidence="16 24 39">
    <original>T</original>
    <variation>V</variation>
    <location>
        <position position="179"/>
    </location>
</feature>
<feature type="mutagenesis site" description="Increased transcriptional activity. Further increased transcriptional activity; when associated with S-208." evidence="16 24 39">
    <original>S</original>
    <variation>A</variation>
    <location>
        <position position="204"/>
    </location>
</feature>
<feature type="mutagenesis site" description="Increased transcriptional activity. Further increased transcriptional activity; when associated with S-208." evidence="16 24 39">
    <original>S</original>
    <variation>A</variation>
    <location>
        <position position="208"/>
    </location>
</feature>
<feature type="mutagenesis site" description="Reduced phosphorylation. Increased transcriptional and antiproliferative activities. Further increase in transcriptional and antiproliferative activities; when associated with V-8 and V-179." evidence="16">
    <original>S</original>
    <variation>A</variation>
    <location>
        <position position="213"/>
    </location>
</feature>
<feature type="mutagenesis site" description="No effect on acetylation. Completely abolishes acetylation and 97% reduction in transcriptional activity; when associated with R-341; R-378 and R-409." evidence="30">
    <original>K</original>
    <variation>R</variation>
    <location>
        <position position="333"/>
    </location>
</feature>
<feature type="mutagenesis site" description="No effect on acetylation. Completely abolishes acetylation and 97% reduction in transcriptional activity; when associated with R-333; R-378 and R-409." evidence="30">
    <original>K</original>
    <variation>R</variation>
    <location>
        <position position="341"/>
    </location>
</feature>
<feature type="mutagenesis site" description="Increased transcriptional activity. No further increase in transcriptional activity with EP300." evidence="30">
    <original>K</original>
    <variation>Q</variation>
    <location>
        <position position="378"/>
    </location>
</feature>
<feature type="mutagenesis site" description="Greatly reduced acetylation and 85% reduction in transcriptional activity. Completely abolishes acetylation and 97% reduction in transcriptional activity; when associated with R-333; R-341 and R-409." evidence="30">
    <original>K</original>
    <variation>R</variation>
    <location>
        <position position="378"/>
    </location>
</feature>
<feature type="mutagenesis site" description="No effect on acetylation. Completely abolishes acetylation and 97% reduction in transcriptional activity; when associated with R-333; R-341 and R-378." evidence="30">
    <original>K</original>
    <variation>R</variation>
    <location>
        <position position="409"/>
    </location>
</feature>
<feature type="mutagenesis site" description="Increased constitutive activity." evidence="37">
    <original>S</original>
    <variation>A</variation>
    <location>
        <position position="418"/>
    </location>
</feature>
<feature type="mutagenesis site" description="Decreased activity." evidence="37">
    <original>S</original>
    <variation>D</variation>
    <location>
        <position position="418"/>
    </location>
</feature>
<feature type="mutagenesis site" description="Does not abolish protein nuclear export. Abolishes almost completely acetylation." evidence="7 26 30">
    <original>SSVS</original>
    <variation>AAVA</variation>
    <location>
        <begin position="422"/>
        <end position="425"/>
    </location>
</feature>
<feature type="mutagenesis site" description="Forms heterotrimers." evidence="7 26 30">
    <original>SSVS</original>
    <variation>EEVE</variation>
    <location>
        <begin position="422"/>
        <end position="425"/>
    </location>
</feature>
<feature type="mutagenesis site" description="Diminishes cargo protein export." evidence="7 26 30">
    <original>SSVS</original>
    <variation>RRVR</variation>
    <location>
        <begin position="422"/>
        <end position="425"/>
    </location>
</feature>
<feature type="sequence conflict" description="In Ref. 3; BAA22032." evidence="64" ref="3">
    <original>E</original>
    <variation>EVGTWAAQAGL</variation>
    <location>
        <position position="178"/>
    </location>
</feature>
<feature type="sequence conflict" description="In Ref. 5; BAH13315." evidence="64" ref="5">
    <original>F</original>
    <variation>L</variation>
    <location>
        <position position="360"/>
    </location>
</feature>
<feature type="helix" evidence="73">
    <location>
        <begin position="11"/>
        <end position="17"/>
    </location>
</feature>
<feature type="helix" evidence="73">
    <location>
        <begin position="25"/>
        <end position="44"/>
    </location>
</feature>
<feature type="helix" evidence="73">
    <location>
        <begin position="48"/>
        <end position="57"/>
    </location>
</feature>
<feature type="strand" evidence="73">
    <location>
        <begin position="60"/>
        <end position="62"/>
    </location>
</feature>
<feature type="strand" evidence="73">
    <location>
        <begin position="66"/>
        <end position="68"/>
    </location>
</feature>
<feature type="strand" evidence="75">
    <location>
        <begin position="71"/>
        <end position="73"/>
    </location>
</feature>
<feature type="strand" evidence="73">
    <location>
        <begin position="75"/>
        <end position="77"/>
    </location>
</feature>
<feature type="strand" evidence="73">
    <location>
        <begin position="80"/>
        <end position="82"/>
    </location>
</feature>
<feature type="helix" evidence="73">
    <location>
        <begin position="84"/>
        <end position="92"/>
    </location>
</feature>
<feature type="helix" evidence="73">
    <location>
        <begin position="100"/>
        <end position="102"/>
    </location>
</feature>
<feature type="strand" evidence="73">
    <location>
        <begin position="103"/>
        <end position="105"/>
    </location>
</feature>
<feature type="helix" evidence="73">
    <location>
        <begin position="113"/>
        <end position="115"/>
    </location>
</feature>
<feature type="strand" evidence="73">
    <location>
        <begin position="118"/>
        <end position="121"/>
    </location>
</feature>
<feature type="helix" evidence="73">
    <location>
        <begin position="124"/>
        <end position="126"/>
    </location>
</feature>
<feature type="strand" evidence="73">
    <location>
        <begin position="127"/>
        <end position="129"/>
    </location>
</feature>
<feature type="strand" evidence="71">
    <location>
        <begin position="221"/>
        <end position="225"/>
    </location>
</feature>
<feature type="strand" evidence="70">
    <location>
        <begin position="231"/>
        <end position="239"/>
    </location>
</feature>
<feature type="strand" evidence="70">
    <location>
        <begin position="242"/>
        <end position="250"/>
    </location>
</feature>
<feature type="strand" evidence="70">
    <location>
        <begin position="252"/>
        <end position="258"/>
    </location>
</feature>
<feature type="strand" evidence="70">
    <location>
        <begin position="268"/>
        <end position="270"/>
    </location>
</feature>
<feature type="helix" evidence="72">
    <location>
        <begin position="271"/>
        <end position="273"/>
    </location>
</feature>
<feature type="helix" evidence="70">
    <location>
        <begin position="281"/>
        <end position="290"/>
    </location>
</feature>
<feature type="strand" evidence="70">
    <location>
        <begin position="294"/>
        <end position="299"/>
    </location>
</feature>
<feature type="strand" evidence="70">
    <location>
        <begin position="302"/>
        <end position="307"/>
    </location>
</feature>
<feature type="strand" evidence="70">
    <location>
        <begin position="309"/>
        <end position="311"/>
    </location>
</feature>
<feature type="strand" evidence="70">
    <location>
        <begin position="313"/>
        <end position="316"/>
    </location>
</feature>
<feature type="helix" evidence="70">
    <location>
        <begin position="318"/>
        <end position="321"/>
    </location>
</feature>
<feature type="helix" evidence="71">
    <location>
        <begin position="323"/>
        <end position="325"/>
    </location>
</feature>
<feature type="strand" evidence="70">
    <location>
        <begin position="332"/>
        <end position="334"/>
    </location>
</feature>
<feature type="strand" evidence="70">
    <location>
        <begin position="339"/>
        <end position="343"/>
    </location>
</feature>
<feature type="helix" evidence="70">
    <location>
        <begin position="345"/>
        <end position="358"/>
    </location>
</feature>
<feature type="helix" evidence="70">
    <location>
        <begin position="360"/>
        <end position="364"/>
    </location>
</feature>
<feature type="helix" evidence="70">
    <location>
        <begin position="365"/>
        <end position="370"/>
    </location>
</feature>
<feature type="strand" evidence="70">
    <location>
        <begin position="371"/>
        <end position="377"/>
    </location>
</feature>
<feature type="strand" evidence="71">
    <location>
        <begin position="384"/>
        <end position="386"/>
    </location>
</feature>
<feature type="helix" evidence="74">
    <location>
        <begin position="389"/>
        <end position="391"/>
    </location>
</feature>
<feature type="strand" evidence="70">
    <location>
        <begin position="392"/>
        <end position="400"/>
    </location>
</feature>
<feature type="helix" evidence="70">
    <location>
        <begin position="401"/>
        <end position="413"/>
    </location>
</feature>
<proteinExistence type="evidence at protein level"/>
<sequence>MSSILPFTPPIVKRLLGWKKGEQNGQEEKWCEKAVKSLVKKLKKTGQLDELEKAITTQNVNTKCITIPRSLDGRLQVSHRKGLPHVIYCRLWRWPDLHSHHELRAMELCEFAFNMKKDEVCVNPYHYQRVETPVLPPVLVPRHTEIPAEFPPLDDYSHSIPENTNFPAGIEPQSNIPETPPPGYLSEDGETSDHQMNHSMDAGSPNLSPNPMSPAHNNLDLQPVTYCEPAFWCSISYYELNQRVGETFHASQPSMTVDGFTDPSNSERFCLGLLSNVNRNAAVELTRRHIGRGVRLYYIGGEVFAECLSDSAIFVQSPNCNQRYGWHPATVCKIPPGCNLKIFNNQEFAALLAQSVNQGFEAVYQLTRMCTIRMSFVKGWGAEYRRQTVTSTPCWIELHLNGPLQWLDKVLTQMGSPSIRCSSVS</sequence>
<protein>
    <recommendedName>
        <fullName>Mothers against decapentaplegic homolog 3</fullName>
        <shortName>MAD homolog 3</shortName>
        <shortName>Mad3</shortName>
        <shortName>Mothers against DPP homolog 3</shortName>
        <shortName>hMAD-3</shortName>
    </recommendedName>
    <alternativeName>
        <fullName>JV15-2</fullName>
    </alternativeName>
    <alternativeName>
        <fullName>SMAD family member 3</fullName>
        <shortName>SMAD 3</shortName>
        <shortName>Smad3</shortName>
        <shortName>hSMAD3</shortName>
    </alternativeName>
</protein>
<accession>P84022</accession>
<accession>A8K4B6</accession>
<accession>B7Z4Z5</accession>
<accession>B7Z6M9</accession>
<accession>B7Z9Q2</accession>
<accession>F5H383</accession>
<accession>O09064</accession>
<accession>O09144</accession>
<accession>O14510</accession>
<accession>O35273</accession>
<accession>Q92940</accession>
<accession>Q93002</accession>
<accession>Q9GKR4</accession>
<name>SMAD3_HUMAN</name>
<organism>
    <name type="scientific">Homo sapiens</name>
    <name type="common">Human</name>
    <dbReference type="NCBI Taxonomy" id="9606"/>
    <lineage>
        <taxon>Eukaryota</taxon>
        <taxon>Metazoa</taxon>
        <taxon>Chordata</taxon>
        <taxon>Craniata</taxon>
        <taxon>Vertebrata</taxon>
        <taxon>Euteleostomi</taxon>
        <taxon>Mammalia</taxon>
        <taxon>Eutheria</taxon>
        <taxon>Euarchontoglires</taxon>
        <taxon>Primates</taxon>
        <taxon>Haplorrhini</taxon>
        <taxon>Catarrhini</taxon>
        <taxon>Hominidae</taxon>
        <taxon>Homo</taxon>
    </lineage>
</organism>
<keyword id="KW-0002">3D-structure</keyword>
<keyword id="KW-0007">Acetylation</keyword>
<keyword id="KW-0013">ADP-ribosylation</keyword>
<keyword id="KW-0025">Alternative splicing</keyword>
<keyword id="KW-0993">Aortic aneurysm</keyword>
<keyword id="KW-0963">Cytoplasm</keyword>
<keyword id="KW-0225">Disease variant</keyword>
<keyword id="KW-0238">DNA-binding</keyword>
<keyword id="KW-0945">Host-virus interaction</keyword>
<keyword id="KW-1017">Isopeptide bond</keyword>
<keyword id="KW-0479">Metal-binding</keyword>
<keyword id="KW-0539">Nucleus</keyword>
<keyword id="KW-0597">Phosphoprotein</keyword>
<keyword id="KW-1267">Proteomics identification</keyword>
<keyword id="KW-1185">Reference proteome</keyword>
<keyword id="KW-0804">Transcription</keyword>
<keyword id="KW-0805">Transcription regulation</keyword>
<keyword id="KW-0832">Ubl conjugation</keyword>
<keyword id="KW-0862">Zinc</keyword>